<protein>
    <recommendedName>
        <fullName>Sodium-dependent noradrenaline transporter</fullName>
    </recommendedName>
    <alternativeName>
        <fullName evidence="14 16">Norepinephrine transporter</fullName>
        <shortName evidence="14 16">NET</shortName>
    </alternativeName>
    <alternativeName>
        <fullName>Solute carrier family 6 member 2</fullName>
    </alternativeName>
</protein>
<evidence type="ECO:0000250" key="1">
    <source>
        <dbReference type="UniProtKB" id="O55192"/>
    </source>
</evidence>
<evidence type="ECO:0000250" key="2">
    <source>
        <dbReference type="UniProtKB" id="Q7K4Y6"/>
    </source>
</evidence>
<evidence type="ECO:0000255" key="3"/>
<evidence type="ECO:0000256" key="4">
    <source>
        <dbReference type="SAM" id="MobiDB-lite"/>
    </source>
</evidence>
<evidence type="ECO:0000269" key="5">
    <source>
    </source>
</evidence>
<evidence type="ECO:0000269" key="6">
    <source>
    </source>
</evidence>
<evidence type="ECO:0000269" key="7">
    <source>
    </source>
</evidence>
<evidence type="ECO:0000269" key="8">
    <source>
    </source>
</evidence>
<evidence type="ECO:0000269" key="9">
    <source>
    </source>
</evidence>
<evidence type="ECO:0000269" key="10">
    <source>
    </source>
</evidence>
<evidence type="ECO:0000269" key="11">
    <source>
    </source>
</evidence>
<evidence type="ECO:0000269" key="12">
    <source>
    </source>
</evidence>
<evidence type="ECO:0000269" key="13">
    <source>
    </source>
</evidence>
<evidence type="ECO:0000303" key="14">
    <source>
    </source>
</evidence>
<evidence type="ECO:0000303" key="15">
    <source>
    </source>
</evidence>
<evidence type="ECO:0000303" key="16">
    <source>
    </source>
</evidence>
<evidence type="ECO:0000305" key="17"/>
<evidence type="ECO:0000312" key="18">
    <source>
        <dbReference type="HGNC" id="HGNC:11048"/>
    </source>
</evidence>
<evidence type="ECO:0007744" key="19">
    <source>
        <dbReference type="PDB" id="8HFE"/>
    </source>
</evidence>
<evidence type="ECO:0007744" key="20">
    <source>
        <dbReference type="PDB" id="8HFF"/>
    </source>
</evidence>
<evidence type="ECO:0007744" key="21">
    <source>
        <dbReference type="PDB" id="8HFG"/>
    </source>
</evidence>
<evidence type="ECO:0007744" key="22">
    <source>
        <dbReference type="PDB" id="8HFI"/>
    </source>
</evidence>
<evidence type="ECO:0007744" key="23">
    <source>
        <dbReference type="PDB" id="8HFL"/>
    </source>
</evidence>
<evidence type="ECO:0007744" key="24">
    <source>
        <dbReference type="PDB" id="8I3V"/>
    </source>
</evidence>
<evidence type="ECO:0007744" key="25">
    <source>
        <dbReference type="PDB" id="8WGR"/>
    </source>
</evidence>
<evidence type="ECO:0007744" key="26">
    <source>
        <dbReference type="PDB" id="8WGX"/>
    </source>
</evidence>
<evidence type="ECO:0007744" key="27">
    <source>
        <dbReference type="PDB" id="8Y8Z"/>
    </source>
</evidence>
<evidence type="ECO:0007744" key="28">
    <source>
        <dbReference type="PDB" id="8Y90"/>
    </source>
</evidence>
<evidence type="ECO:0007744" key="29">
    <source>
        <dbReference type="PDB" id="8Y91"/>
    </source>
</evidence>
<evidence type="ECO:0007744" key="30">
    <source>
        <dbReference type="PDB" id="8Y92"/>
    </source>
</evidence>
<evidence type="ECO:0007744" key="31">
    <source>
        <dbReference type="PDB" id="8Y93"/>
    </source>
</evidence>
<evidence type="ECO:0007744" key="32">
    <source>
        <dbReference type="PDB" id="8Y94"/>
    </source>
</evidence>
<evidence type="ECO:0007744" key="33">
    <source>
        <dbReference type="PDB" id="8Y95"/>
    </source>
</evidence>
<evidence type="ECO:0007744" key="34">
    <source>
        <dbReference type="PDB" id="8YR2"/>
    </source>
</evidence>
<evidence type="ECO:0007744" key="35">
    <source>
        <dbReference type="PDB" id="8Z1L"/>
    </source>
</evidence>
<evidence type="ECO:0007829" key="36">
    <source>
        <dbReference type="PDB" id="8HFE"/>
    </source>
</evidence>
<evidence type="ECO:0007829" key="37">
    <source>
        <dbReference type="PDB" id="8HFI"/>
    </source>
</evidence>
<evidence type="ECO:0007829" key="38">
    <source>
        <dbReference type="PDB" id="8HFL"/>
    </source>
</evidence>
<evidence type="ECO:0007829" key="39">
    <source>
        <dbReference type="PDB" id="8WGR"/>
    </source>
</evidence>
<evidence type="ECO:0007829" key="40">
    <source>
        <dbReference type="PDB" id="8WTU"/>
    </source>
</evidence>
<evidence type="ECO:0007829" key="41">
    <source>
        <dbReference type="PDB" id="8WTX"/>
    </source>
</evidence>
<evidence type="ECO:0007829" key="42">
    <source>
        <dbReference type="PDB" id="8XB3"/>
    </source>
</evidence>
<evidence type="ECO:0007829" key="43">
    <source>
        <dbReference type="PDB" id="8XB4"/>
    </source>
</evidence>
<evidence type="ECO:0007829" key="44">
    <source>
        <dbReference type="PDB" id="8Y93"/>
    </source>
</evidence>
<evidence type="ECO:0007829" key="45">
    <source>
        <dbReference type="PDB" id="8Y95"/>
    </source>
</evidence>
<evidence type="ECO:0007829" key="46">
    <source>
        <dbReference type="PDB" id="8ZPB"/>
    </source>
</evidence>
<comment type="function">
    <text evidence="1 6 9 10 11 13">Mediates sodium- and chloride-dependent transport of norepinephrine (also known as noradrenaline), the primary signaling neurotransmitter in the autonomic sympathetic nervous system (PubMed:2008212, PubMed:8125921, PubMed:38750358). Is responsible for norepinephrine re-uptake and clearance from the synaptic cleft, thus playing a crucial role in norepinephrine inactivation and homeostasis (By similarity). Can also mediate sodium- and chloride-dependent transport of dopamine (PubMed:11093780, PubMed:8125921, PubMed:39395208, PubMed:39048818).</text>
</comment>
<comment type="catalytic activity">
    <reaction evidence="8 9 11 13">
        <text>(R)-noradrenaline(out) + chloride(out) + Na(+)(out) = (R)-noradrenaline(in) + chloride(in) + Na(+)(in)</text>
        <dbReference type="Rhea" id="RHEA:70923"/>
        <dbReference type="ChEBI" id="CHEBI:17996"/>
        <dbReference type="ChEBI" id="CHEBI:29101"/>
        <dbReference type="ChEBI" id="CHEBI:72587"/>
    </reaction>
</comment>
<comment type="catalytic activity">
    <reaction evidence="6 11">
        <text>dopamine(out) + chloride(out) + Na(+)(out) = dopamine(in) + chloride(in) + Na(+)(in)</text>
        <dbReference type="Rhea" id="RHEA:70919"/>
        <dbReference type="ChEBI" id="CHEBI:17996"/>
        <dbReference type="ChEBI" id="CHEBI:29101"/>
        <dbReference type="ChEBI" id="CHEBI:59905"/>
    </reaction>
</comment>
<comment type="catalytic activity">
    <reaction evidence="13">
        <text>dopamine(out) + chloride(out) + 2 Na(+)(out) = dopamine(in) + chloride(in) + 2 Na(+)(in)</text>
        <dbReference type="Rhea" id="RHEA:70931"/>
        <dbReference type="ChEBI" id="CHEBI:17996"/>
        <dbReference type="ChEBI" id="CHEBI:29101"/>
        <dbReference type="ChEBI" id="CHEBI:59905"/>
    </reaction>
</comment>
<comment type="activity regulation">
    <text evidence="9">Inhibited by mazindol, desipramine, nomifensine and nortriptyline.</text>
</comment>
<comment type="biophysicochemical properties">
    <kinetics>
        <KM evidence="9">0.46 uM for noradrenaline</KM>
        <KM evidence="13">0.58 uM for noradrenaline</KM>
        <KM evidence="8">2.12 uM for noradrenaline</KM>
        <KM evidence="11">0.29 uM for noradrenaline</KM>
        <KM evidence="13">0.24 uM for dopamine</KM>
        <KM evidence="11">0.52 uM for dopamine</KM>
        <KM evidence="6">100 mM for Na(+) in dopamine transport</KM>
        <KM evidence="6">27 mM for Cl(-) in dopamine transport</KM>
        <Vmax evidence="13">17.0 pmol/min/mg enzyme for noradrenaline</Vmax>
        <Vmax evidence="13">32.0 pmol/min/mg enzyme for dopamine</Vmax>
        <Vmax evidence="8">130.0 pmol/min/mg enzyme for noradrenaline</Vmax>
        <Vmax evidence="11">2.96 nmol/min/mg enzyme for noradrenaline</Vmax>
        <Vmax evidence="11">2.23 nmol/min/mg enzyme for dopamine</Vmax>
    </kinetics>
</comment>
<comment type="subunit">
    <text evidence="7 10 11">Monomer (PubMed:39048818). Can form homodimers in the cell membrane; homodimerization is mostly mediated by cholesterol and lipids, and regulates neurotransmitter transport activity (PubMed:38750358). Interacts with PRKCABP.</text>
</comment>
<comment type="subcellular location">
    <subcellularLocation>
        <location evidence="7">Cell membrane</location>
        <topology evidence="3">Multi-pass membrane protein</topology>
    </subcellularLocation>
    <subcellularLocation>
        <location evidence="1">Cell projection</location>
        <location evidence="1">Axon</location>
    </subcellularLocation>
    <subcellularLocation>
        <location evidence="1">Synapse</location>
        <location evidence="1">Synaptosome</location>
    </subcellularLocation>
</comment>
<comment type="alternative products">
    <event type="alternative splicing"/>
    <isoform>
        <id>P23975-1</id>
        <name>1</name>
        <sequence type="displayed"/>
    </isoform>
    <isoform>
        <id>P23975-2</id>
        <name>2</name>
        <sequence type="described" ref="VSP_044479"/>
    </isoform>
    <isoform>
        <id>P23975-3</id>
        <name>3</name>
        <sequence type="described" ref="VSP_054119"/>
    </isoform>
</comment>
<comment type="PTM">
    <text evidence="12">Palmitoylated; palmitoylation regulates protein levels and neurotransmitter transport (PubMed:39395208).</text>
</comment>
<comment type="disease" evidence="5 8">
    <disease id="DI-02100">
        <name>Orthostatic intolerance</name>
        <acronym>ORSTI</acronym>
        <description>An autosomal dominant disorder characterized by lightheadedness, palpitations, fatigue, blurred vision and tachycardia following postural change from a supine to an upright position, in the absence of hypotension. A syncope with transient cognitive impairment and dyspnea may also occur. Plasma norepinephrine concentration is abnormally high.</description>
        <dbReference type="MIM" id="604715"/>
    </disease>
    <text>The disease is caused by variants affecting the gene represented in this entry.</text>
</comment>
<comment type="miscellaneous">
    <text>This protein is the target of psychomotor stimulants such as amphetamines or cocaine.</text>
</comment>
<comment type="similarity">
    <text evidence="17">Belongs to the sodium:neurotransmitter symporter (SNF) (TC 2.A.22) family. SLC6A2 subfamily.</text>
</comment>
<organism>
    <name type="scientific">Homo sapiens</name>
    <name type="common">Human</name>
    <dbReference type="NCBI Taxonomy" id="9606"/>
    <lineage>
        <taxon>Eukaryota</taxon>
        <taxon>Metazoa</taxon>
        <taxon>Chordata</taxon>
        <taxon>Craniata</taxon>
        <taxon>Vertebrata</taxon>
        <taxon>Euteleostomi</taxon>
        <taxon>Mammalia</taxon>
        <taxon>Eutheria</taxon>
        <taxon>Euarchontoglires</taxon>
        <taxon>Primates</taxon>
        <taxon>Haplorrhini</taxon>
        <taxon>Catarrhini</taxon>
        <taxon>Hominidae</taxon>
        <taxon>Homo</taxon>
    </lineage>
</organism>
<accession>P23975</accession>
<accession>B2R707</accession>
<accession>B4DX48</accession>
<accession>Q96KH8</accession>
<reference key="1">
    <citation type="journal article" date="1991" name="Nature">
        <title>Expression cloning of a cocaine- and antidepressant-sensitive human noradrenaline transporter.</title>
        <authorList>
            <person name="Pacholczyk T."/>
            <person name="Blakely R.D."/>
            <person name="Amara S.G."/>
        </authorList>
    </citation>
    <scope>NUCLEOTIDE SEQUENCE [MRNA] (ISOFORM 1)</scope>
    <scope>FUNCTION</scope>
    <scope>TRANSPORTER ACTIVITY</scope>
    <scope>BIOPHYSICOCHEMICAL PROPERTIES</scope>
    <scope>ACTIVITY REGULATION</scope>
</reference>
<reference key="2">
    <citation type="journal article" date="1995" name="Biochem. Biophys. Res. Commun.">
        <title>Molecular cloning and organization of the coding region of the human norepinephrine transporter gene.</title>
        <authorList>
            <person name="Poerzgen P."/>
            <person name="Boenisch H."/>
            <person name="Bruss M."/>
        </authorList>
    </citation>
    <scope>NUCLEOTIDE SEQUENCE [GENOMIC DNA]</scope>
    <source>
        <tissue>Lung</tissue>
    </source>
</reference>
<reference key="3">
    <citation type="journal article" date="1998" name="Biochim. Biophys. Acta">
        <title>The human noradrenaline transporter gene contains multiple polyadenylation sites and two alternatively spliced C-terminal exons.</title>
        <authorList>
            <person name="Porzgen P."/>
            <person name="Bonisch H."/>
            <person name="Hammermann R."/>
            <person name="Bruss M."/>
        </authorList>
    </citation>
    <scope>NUCLEOTIDE SEQUENCE [GENOMIC DNA] (ISOFORM 2)</scope>
    <scope>ALTERNATIVE SPLICING</scope>
    <source>
        <tissue>Lung</tissue>
    </source>
</reference>
<reference key="4">
    <citation type="journal article" date="2004" name="Nat. Genet.">
        <title>Complete sequencing and characterization of 21,243 full-length human cDNAs.</title>
        <authorList>
            <person name="Ota T."/>
            <person name="Suzuki Y."/>
            <person name="Nishikawa T."/>
            <person name="Otsuki T."/>
            <person name="Sugiyama T."/>
            <person name="Irie R."/>
            <person name="Wakamatsu A."/>
            <person name="Hayashi K."/>
            <person name="Sato H."/>
            <person name="Nagai K."/>
            <person name="Kimura K."/>
            <person name="Makita H."/>
            <person name="Sekine M."/>
            <person name="Obayashi M."/>
            <person name="Nishi T."/>
            <person name="Shibahara T."/>
            <person name="Tanaka T."/>
            <person name="Ishii S."/>
            <person name="Yamamoto J."/>
            <person name="Saito K."/>
            <person name="Kawai Y."/>
            <person name="Isono Y."/>
            <person name="Nakamura Y."/>
            <person name="Nagahari K."/>
            <person name="Murakami K."/>
            <person name="Yasuda T."/>
            <person name="Iwayanagi T."/>
            <person name="Wagatsuma M."/>
            <person name="Shiratori A."/>
            <person name="Sudo H."/>
            <person name="Hosoiri T."/>
            <person name="Kaku Y."/>
            <person name="Kodaira H."/>
            <person name="Kondo H."/>
            <person name="Sugawara M."/>
            <person name="Takahashi M."/>
            <person name="Kanda K."/>
            <person name="Yokoi T."/>
            <person name="Furuya T."/>
            <person name="Kikkawa E."/>
            <person name="Omura Y."/>
            <person name="Abe K."/>
            <person name="Kamihara K."/>
            <person name="Katsuta N."/>
            <person name="Sato K."/>
            <person name="Tanikawa M."/>
            <person name="Yamazaki M."/>
            <person name="Ninomiya K."/>
            <person name="Ishibashi T."/>
            <person name="Yamashita H."/>
            <person name="Murakawa K."/>
            <person name="Fujimori K."/>
            <person name="Tanai H."/>
            <person name="Kimata M."/>
            <person name="Watanabe M."/>
            <person name="Hiraoka S."/>
            <person name="Chiba Y."/>
            <person name="Ishida S."/>
            <person name="Ono Y."/>
            <person name="Takiguchi S."/>
            <person name="Watanabe S."/>
            <person name="Yosida M."/>
            <person name="Hotuta T."/>
            <person name="Kusano J."/>
            <person name="Kanehori K."/>
            <person name="Takahashi-Fujii A."/>
            <person name="Hara H."/>
            <person name="Tanase T.-O."/>
            <person name="Nomura Y."/>
            <person name="Togiya S."/>
            <person name="Komai F."/>
            <person name="Hara R."/>
            <person name="Takeuchi K."/>
            <person name="Arita M."/>
            <person name="Imose N."/>
            <person name="Musashino K."/>
            <person name="Yuuki H."/>
            <person name="Oshima A."/>
            <person name="Sasaki N."/>
            <person name="Aotsuka S."/>
            <person name="Yoshikawa Y."/>
            <person name="Matsunawa H."/>
            <person name="Ichihara T."/>
            <person name="Shiohata N."/>
            <person name="Sano S."/>
            <person name="Moriya S."/>
            <person name="Momiyama H."/>
            <person name="Satoh N."/>
            <person name="Takami S."/>
            <person name="Terashima Y."/>
            <person name="Suzuki O."/>
            <person name="Nakagawa S."/>
            <person name="Senoh A."/>
            <person name="Mizoguchi H."/>
            <person name="Goto Y."/>
            <person name="Shimizu F."/>
            <person name="Wakebe H."/>
            <person name="Hishigaki H."/>
            <person name="Watanabe T."/>
            <person name="Sugiyama A."/>
            <person name="Takemoto M."/>
            <person name="Kawakami B."/>
            <person name="Yamazaki M."/>
            <person name="Watanabe K."/>
            <person name="Kumagai A."/>
            <person name="Itakura S."/>
            <person name="Fukuzumi Y."/>
            <person name="Fujimori Y."/>
            <person name="Komiyama M."/>
            <person name="Tashiro H."/>
            <person name="Tanigami A."/>
            <person name="Fujiwara T."/>
            <person name="Ono T."/>
            <person name="Yamada K."/>
            <person name="Fujii Y."/>
            <person name="Ozaki K."/>
            <person name="Hirao M."/>
            <person name="Ohmori Y."/>
            <person name="Kawabata A."/>
            <person name="Hikiji T."/>
            <person name="Kobatake N."/>
            <person name="Inagaki H."/>
            <person name="Ikema Y."/>
            <person name="Okamoto S."/>
            <person name="Okitani R."/>
            <person name="Kawakami T."/>
            <person name="Noguchi S."/>
            <person name="Itoh T."/>
            <person name="Shigeta K."/>
            <person name="Senba T."/>
            <person name="Matsumura K."/>
            <person name="Nakajima Y."/>
            <person name="Mizuno T."/>
            <person name="Morinaga M."/>
            <person name="Sasaki M."/>
            <person name="Togashi T."/>
            <person name="Oyama M."/>
            <person name="Hata H."/>
            <person name="Watanabe M."/>
            <person name="Komatsu T."/>
            <person name="Mizushima-Sugano J."/>
            <person name="Satoh T."/>
            <person name="Shirai Y."/>
            <person name="Takahashi Y."/>
            <person name="Nakagawa K."/>
            <person name="Okumura K."/>
            <person name="Nagase T."/>
            <person name="Nomura N."/>
            <person name="Kikuchi H."/>
            <person name="Masuho Y."/>
            <person name="Yamashita R."/>
            <person name="Nakai K."/>
            <person name="Yada T."/>
            <person name="Nakamura Y."/>
            <person name="Ohara O."/>
            <person name="Isogai T."/>
            <person name="Sugano S."/>
        </authorList>
    </citation>
    <scope>NUCLEOTIDE SEQUENCE [LARGE SCALE MRNA] (ISOFORMS 1 AND 3)</scope>
    <source>
        <tissue>Testis</tissue>
    </source>
</reference>
<reference key="5">
    <citation type="journal article" date="2004" name="Nature">
        <title>The sequence and analysis of duplication-rich human chromosome 16.</title>
        <authorList>
            <person name="Martin J."/>
            <person name="Han C."/>
            <person name="Gordon L.A."/>
            <person name="Terry A."/>
            <person name="Prabhakar S."/>
            <person name="She X."/>
            <person name="Xie G."/>
            <person name="Hellsten U."/>
            <person name="Chan Y.M."/>
            <person name="Altherr M."/>
            <person name="Couronne O."/>
            <person name="Aerts A."/>
            <person name="Bajorek E."/>
            <person name="Black S."/>
            <person name="Blumer H."/>
            <person name="Branscomb E."/>
            <person name="Brown N.C."/>
            <person name="Bruno W.J."/>
            <person name="Buckingham J.M."/>
            <person name="Callen D.F."/>
            <person name="Campbell C.S."/>
            <person name="Campbell M.L."/>
            <person name="Campbell E.W."/>
            <person name="Caoile C."/>
            <person name="Challacombe J.F."/>
            <person name="Chasteen L.A."/>
            <person name="Chertkov O."/>
            <person name="Chi H.C."/>
            <person name="Christensen M."/>
            <person name="Clark L.M."/>
            <person name="Cohn J.D."/>
            <person name="Denys M."/>
            <person name="Detter J.C."/>
            <person name="Dickson M."/>
            <person name="Dimitrijevic-Bussod M."/>
            <person name="Escobar J."/>
            <person name="Fawcett J.J."/>
            <person name="Flowers D."/>
            <person name="Fotopulos D."/>
            <person name="Glavina T."/>
            <person name="Gomez M."/>
            <person name="Gonzales E."/>
            <person name="Goodstein D."/>
            <person name="Goodwin L.A."/>
            <person name="Grady D.L."/>
            <person name="Grigoriev I."/>
            <person name="Groza M."/>
            <person name="Hammon N."/>
            <person name="Hawkins T."/>
            <person name="Haydu L."/>
            <person name="Hildebrand C.E."/>
            <person name="Huang W."/>
            <person name="Israni S."/>
            <person name="Jett J."/>
            <person name="Jewett P.B."/>
            <person name="Kadner K."/>
            <person name="Kimball H."/>
            <person name="Kobayashi A."/>
            <person name="Krawczyk M.-C."/>
            <person name="Leyba T."/>
            <person name="Longmire J.L."/>
            <person name="Lopez F."/>
            <person name="Lou Y."/>
            <person name="Lowry S."/>
            <person name="Ludeman T."/>
            <person name="Manohar C.F."/>
            <person name="Mark G.A."/>
            <person name="McMurray K.L."/>
            <person name="Meincke L.J."/>
            <person name="Morgan J."/>
            <person name="Moyzis R.K."/>
            <person name="Mundt M.O."/>
            <person name="Munk A.C."/>
            <person name="Nandkeshwar R.D."/>
            <person name="Pitluck S."/>
            <person name="Pollard M."/>
            <person name="Predki P."/>
            <person name="Parson-Quintana B."/>
            <person name="Ramirez L."/>
            <person name="Rash S."/>
            <person name="Retterer J."/>
            <person name="Ricke D.O."/>
            <person name="Robinson D.L."/>
            <person name="Rodriguez A."/>
            <person name="Salamov A."/>
            <person name="Saunders E.H."/>
            <person name="Scott D."/>
            <person name="Shough T."/>
            <person name="Stallings R.L."/>
            <person name="Stalvey M."/>
            <person name="Sutherland R.D."/>
            <person name="Tapia R."/>
            <person name="Tesmer J.G."/>
            <person name="Thayer N."/>
            <person name="Thompson L.S."/>
            <person name="Tice H."/>
            <person name="Torney D.C."/>
            <person name="Tran-Gyamfi M."/>
            <person name="Tsai M."/>
            <person name="Ulanovsky L.E."/>
            <person name="Ustaszewska A."/>
            <person name="Vo N."/>
            <person name="White P.S."/>
            <person name="Williams A.L."/>
            <person name="Wills P.L."/>
            <person name="Wu J.-R."/>
            <person name="Wu K."/>
            <person name="Yang J."/>
            <person name="DeJong P."/>
            <person name="Bruce D."/>
            <person name="Doggett N.A."/>
            <person name="Deaven L."/>
            <person name="Schmutz J."/>
            <person name="Grimwood J."/>
            <person name="Richardson P."/>
            <person name="Rokhsar D.S."/>
            <person name="Eichler E.E."/>
            <person name="Gilna P."/>
            <person name="Lucas S.M."/>
            <person name="Myers R.M."/>
            <person name="Rubin E.M."/>
            <person name="Pennacchio L.A."/>
        </authorList>
    </citation>
    <scope>NUCLEOTIDE SEQUENCE [LARGE SCALE GENOMIC DNA]</scope>
</reference>
<reference key="6">
    <citation type="submission" date="2005-07" db="EMBL/GenBank/DDBJ databases">
        <authorList>
            <person name="Mural R.J."/>
            <person name="Istrail S."/>
            <person name="Sutton G.G."/>
            <person name="Florea L."/>
            <person name="Halpern A.L."/>
            <person name="Mobarry C.M."/>
            <person name="Lippert R."/>
            <person name="Walenz B."/>
            <person name="Shatkay H."/>
            <person name="Dew I."/>
            <person name="Miller J.R."/>
            <person name="Flanigan M.J."/>
            <person name="Edwards N.J."/>
            <person name="Bolanos R."/>
            <person name="Fasulo D."/>
            <person name="Halldorsson B.V."/>
            <person name="Hannenhalli S."/>
            <person name="Turner R."/>
            <person name="Yooseph S."/>
            <person name="Lu F."/>
            <person name="Nusskern D.R."/>
            <person name="Shue B.C."/>
            <person name="Zheng X.H."/>
            <person name="Zhong F."/>
            <person name="Delcher A.L."/>
            <person name="Huson D.H."/>
            <person name="Kravitz S.A."/>
            <person name="Mouchard L."/>
            <person name="Reinert K."/>
            <person name="Remington K.A."/>
            <person name="Clark A.G."/>
            <person name="Waterman M.S."/>
            <person name="Eichler E.E."/>
            <person name="Adams M.D."/>
            <person name="Hunkapiller M.W."/>
            <person name="Myers E.W."/>
            <person name="Venter J.C."/>
        </authorList>
    </citation>
    <scope>NUCLEOTIDE SEQUENCE [LARGE SCALE GENOMIC DNA]</scope>
</reference>
<reference key="7">
    <citation type="journal article" date="1994" name="J. Biol. Chem.">
        <title>Stable expression of biogenic amine transporters reveals differences in inhibitor sensitivity, kinetics, and ion dependence.</title>
        <authorList>
            <person name="Gu H."/>
            <person name="Wall S.C."/>
            <person name="Rudnick G."/>
        </authorList>
    </citation>
    <scope>FUNCTION</scope>
    <scope>TRANSPORTER ACTIVITY</scope>
    <scope>BIOPHYSICOCHEMICAL PROPERTIES</scope>
</reference>
<reference key="8">
    <citation type="journal article" date="2000" name="Mol. Pharmacol.">
        <title>Structural domains of chimeric dopamine-noradrenaline human transporters involved in the Na(+)- and Cl(-)-dependence of dopamine transport.</title>
        <authorList>
            <person name="Syringas M."/>
            <person name="Janin F."/>
            <person name="Mezghanni S."/>
            <person name="Giros B."/>
            <person name="Costentin J."/>
            <person name="Bonnet J.J."/>
        </authorList>
    </citation>
    <scope>FUNCTION</scope>
    <scope>TRANSPORTER ACTIVITY</scope>
    <scope>BIOPHYSICOCHEMICAL PROPERTIES</scope>
</reference>
<reference key="9">
    <citation type="journal article" date="2001" name="Neuron">
        <title>Functional interaction between monoamine plasma membrane transporters and the synaptic PDZ domain-containing protein PICK1.</title>
        <authorList>
            <person name="Torres G.E."/>
            <person name="Yao W.-D."/>
            <person name="Mohn A.R."/>
            <person name="Quan H."/>
            <person name="Kim K.-M."/>
            <person name="Levey A.I."/>
            <person name="Staudinger J."/>
            <person name="Caron M.G."/>
        </authorList>
    </citation>
    <scope>INTERACTION WITH PRKCABP</scope>
    <scope>SUBCELLULAR LOCATION</scope>
</reference>
<reference key="10">
    <citation type="journal article" date="2025" name="J. Neurochem.">
        <title>Palmitoylation regulates norepinephrine transporter uptake, surface localization, and total expression with pathogenic implications in postural orthostatic tachycardia syndrome.</title>
        <authorList>
            <person name="Brown C.R."/>
            <person name="Shetty M."/>
            <person name="Foster J.D."/>
        </authorList>
    </citation>
    <scope>FUNCTION</scope>
    <scope>PALMITOYLATION</scope>
    <scope>MUTAGENESIS OF CYS-44</scope>
    <scope>CHARACTERIZATION OF VARIANT PRO-457</scope>
</reference>
<reference evidence="27 28 29 30 31 32 33 34" key="11">
    <citation type="journal article" date="2024" name="Nature">
        <title>Dimerization and antidepressant recognition at noradrenaline transporter.</title>
        <authorList>
            <person name="Zhang H."/>
            <person name="Yin Y.L."/>
            <person name="Dai A."/>
            <person name="Zhang T."/>
            <person name="Zhang C."/>
            <person name="Wu C."/>
            <person name="Hu W."/>
            <person name="He X."/>
            <person name="Pan B."/>
            <person name="Jin S."/>
            <person name="Yuan Q."/>
            <person name="Wang M.W."/>
            <person name="Yang D."/>
            <person name="Xu H.E."/>
            <person name="Jiang Y."/>
        </authorList>
    </citation>
    <scope>STRUCTURE BY ELECTRON MICROSCOPY (2.89 ANGSTROMS) OF APOPROTEIN AND COMPLEXES WITH NOREPINEPHRINE AND ANTIDEPRESSANT DRUGS</scope>
    <scope>SUBUNIT</scope>
    <scope>FUNCTION</scope>
    <scope>MUTAGENESIS OF PHE-72; ASP-75; LYS-135; TYR-152; LEU-232; TRP-235; PHE-317; GLY-320; PHE-323; SER-419; SER-420; GLY-423; PHE-435; LEU-438; LEU-444; PHE-459 AND TRP-553</scope>
</reference>
<reference evidence="19 20 21 22 23 24 25 26 35" key="12">
    <citation type="journal article" date="2024" name="Nature">
        <title>Molecular basis of human noradrenaline transporter reuptake and inhibition.</title>
        <authorList>
            <person name="Tan J."/>
            <person name="Xiao Y."/>
            <person name="Kong F."/>
            <person name="Zhang X."/>
            <person name="Xu H."/>
            <person name="Zhu A."/>
            <person name="Liu Y."/>
            <person name="Lei J."/>
            <person name="Tian B."/>
            <person name="Yuan Y."/>
            <person name="Yan C."/>
        </authorList>
    </citation>
    <scope>STRUCTURE BY ELECTRON MICROSCOPY (2.50 ANGSTROMS) OF APOPROTEIN AND COMPLEXES WITH NOREPINEPHRINE; DOPAMINE AND ANTIDEPRESSANT DRUGS</scope>
    <scope>DISULFIDE BONDS</scope>
    <scope>SUBUNIT</scope>
    <scope>FUNCTION</scope>
    <scope>CATALYTIC ACTIVITY</scope>
    <scope>BIOPHYSICOCHEMICAL PROPERTIES</scope>
    <scope>MUTAGENESIS OF ASP-75; VAL-148; GLY-149; TYR-152; ASN-153; PHE-323; VAL-325; SER-420 AND GLY-423</scope>
</reference>
<reference key="13">
    <citation type="journal article" date="2000" name="N. Engl. J. Med.">
        <title>Orthostatic intolerance and tachycardia associated with norepinephrine-transporter deficiency.</title>
        <authorList>
            <person name="Shannon J.R."/>
            <person name="Flattem N.L."/>
            <person name="Jordan J."/>
            <person name="Jacob G."/>
            <person name="Black B.K."/>
            <person name="Biaggioni I."/>
            <person name="Blakely R.D."/>
            <person name="Robertson D."/>
        </authorList>
    </citation>
    <scope>VARIANT ORSTI PRO-457</scope>
    <scope>INVOLVEMENT IN ORSTI</scope>
    <scope>CHARACTERIZATION OF VARIANT ORSTI PRO-457</scope>
</reference>
<reference key="14">
    <citation type="journal article" date="2002" name="Pharmacogenetics">
        <title>Pharmacological properties of the naturally occurring Ala(457)Pro variant of the human norepinephrine transporter.</title>
        <authorList>
            <person name="Paczkowski F.A."/>
            <person name="Boenisch H."/>
            <person name="Bryan-Lluka L.J."/>
        </authorList>
    </citation>
    <scope>CHARACTERIZATION OF VARIANT ORSTI PRO-457</scope>
    <scope>TRANSPORTER ACTIVITY</scope>
    <scope>BIOPHYSICOCHEMICAL PROPERTIES</scope>
</reference>
<keyword id="KW-0002">3D-structure</keyword>
<keyword id="KW-0025">Alternative splicing</keyword>
<keyword id="KW-1003">Cell membrane</keyword>
<keyword id="KW-0966">Cell projection</keyword>
<keyword id="KW-0225">Disease variant</keyword>
<keyword id="KW-1015">Disulfide bond</keyword>
<keyword id="KW-0325">Glycoprotein</keyword>
<keyword id="KW-0449">Lipoprotein</keyword>
<keyword id="KW-0472">Membrane</keyword>
<keyword id="KW-0479">Metal-binding</keyword>
<keyword id="KW-0532">Neurotransmitter transport</keyword>
<keyword id="KW-0564">Palmitate</keyword>
<keyword id="KW-1267">Proteomics identification</keyword>
<keyword id="KW-1185">Reference proteome</keyword>
<keyword id="KW-0915">Sodium</keyword>
<keyword id="KW-0769">Symport</keyword>
<keyword id="KW-0770">Synapse</keyword>
<keyword id="KW-0771">Synaptosome</keyword>
<keyword id="KW-0812">Transmembrane</keyword>
<keyword id="KW-1133">Transmembrane helix</keyword>
<keyword id="KW-0813">Transport</keyword>
<dbReference type="EMBL" id="M65105">
    <property type="protein sequence ID" value="AAA59943.1"/>
    <property type="molecule type" value="mRNA"/>
</dbReference>
<dbReference type="EMBL" id="X91117">
    <property type="protein sequence ID" value="CAA62566.1"/>
    <property type="molecule type" value="Genomic_DNA"/>
</dbReference>
<dbReference type="EMBL" id="X91120">
    <property type="protein sequence ID" value="CAA62566.1"/>
    <property type="status" value="JOINED"/>
    <property type="molecule type" value="Genomic_DNA"/>
</dbReference>
<dbReference type="EMBL" id="X91121">
    <property type="protein sequence ID" value="CAA62566.1"/>
    <property type="status" value="JOINED"/>
    <property type="molecule type" value="Genomic_DNA"/>
</dbReference>
<dbReference type="EMBL" id="X91122">
    <property type="protein sequence ID" value="CAA62566.1"/>
    <property type="status" value="JOINED"/>
    <property type="molecule type" value="Genomic_DNA"/>
</dbReference>
<dbReference type="EMBL" id="X91123">
    <property type="protein sequence ID" value="CAA62566.1"/>
    <property type="status" value="JOINED"/>
    <property type="molecule type" value="Genomic_DNA"/>
</dbReference>
<dbReference type="EMBL" id="X91124">
    <property type="protein sequence ID" value="CAA62566.1"/>
    <property type="status" value="JOINED"/>
    <property type="molecule type" value="Genomic_DNA"/>
</dbReference>
<dbReference type="EMBL" id="X91125">
    <property type="protein sequence ID" value="CAA62566.1"/>
    <property type="status" value="JOINED"/>
    <property type="molecule type" value="Genomic_DNA"/>
</dbReference>
<dbReference type="EMBL" id="X91126">
    <property type="protein sequence ID" value="CAA62566.1"/>
    <property type="status" value="JOINED"/>
    <property type="molecule type" value="Genomic_DNA"/>
</dbReference>
<dbReference type="EMBL" id="X91127">
    <property type="protein sequence ID" value="CAA62566.1"/>
    <property type="status" value="JOINED"/>
    <property type="molecule type" value="Genomic_DNA"/>
</dbReference>
<dbReference type="EMBL" id="X91118">
    <property type="protein sequence ID" value="CAA62566.1"/>
    <property type="status" value="JOINED"/>
    <property type="molecule type" value="Genomic_DNA"/>
</dbReference>
<dbReference type="EMBL" id="X91119">
    <property type="protein sequence ID" value="CAA62566.1"/>
    <property type="status" value="JOINED"/>
    <property type="molecule type" value="Genomic_DNA"/>
</dbReference>
<dbReference type="EMBL" id="X91117">
    <property type="protein sequence ID" value="CAC39181.1"/>
    <property type="molecule type" value="Genomic_DNA"/>
</dbReference>
<dbReference type="EMBL" id="X91118">
    <property type="protein sequence ID" value="CAC39181.1"/>
    <property type="status" value="JOINED"/>
    <property type="molecule type" value="Genomic_DNA"/>
</dbReference>
<dbReference type="EMBL" id="X91119">
    <property type="protein sequence ID" value="CAC39181.1"/>
    <property type="status" value="JOINED"/>
    <property type="molecule type" value="Genomic_DNA"/>
</dbReference>
<dbReference type="EMBL" id="X91120">
    <property type="protein sequence ID" value="CAC39181.1"/>
    <property type="status" value="JOINED"/>
    <property type="molecule type" value="Genomic_DNA"/>
</dbReference>
<dbReference type="EMBL" id="X91121">
    <property type="protein sequence ID" value="CAC39181.1"/>
    <property type="status" value="JOINED"/>
    <property type="molecule type" value="Genomic_DNA"/>
</dbReference>
<dbReference type="EMBL" id="X91122">
    <property type="protein sequence ID" value="CAC39181.1"/>
    <property type="status" value="JOINED"/>
    <property type="molecule type" value="Genomic_DNA"/>
</dbReference>
<dbReference type="EMBL" id="X91123">
    <property type="protein sequence ID" value="CAC39181.1"/>
    <property type="status" value="JOINED"/>
    <property type="molecule type" value="Genomic_DNA"/>
</dbReference>
<dbReference type="EMBL" id="X91124">
    <property type="protein sequence ID" value="CAC39181.1"/>
    <property type="status" value="JOINED"/>
    <property type="molecule type" value="Genomic_DNA"/>
</dbReference>
<dbReference type="EMBL" id="X91125">
    <property type="protein sequence ID" value="CAC39181.1"/>
    <property type="status" value="JOINED"/>
    <property type="molecule type" value="Genomic_DNA"/>
</dbReference>
<dbReference type="EMBL" id="X91126">
    <property type="protein sequence ID" value="CAC39181.1"/>
    <property type="status" value="JOINED"/>
    <property type="molecule type" value="Genomic_DNA"/>
</dbReference>
<dbReference type="EMBL" id="X91127">
    <property type="protein sequence ID" value="CAC39181.1"/>
    <property type="status" value="JOINED"/>
    <property type="molecule type" value="Genomic_DNA"/>
</dbReference>
<dbReference type="EMBL" id="AK301811">
    <property type="protein sequence ID" value="BAG63260.1"/>
    <property type="molecule type" value="mRNA"/>
</dbReference>
<dbReference type="EMBL" id="AK312793">
    <property type="protein sequence ID" value="BAG35654.1"/>
    <property type="molecule type" value="mRNA"/>
</dbReference>
<dbReference type="EMBL" id="AC136621">
    <property type="status" value="NOT_ANNOTATED_CDS"/>
    <property type="molecule type" value="Genomic_DNA"/>
</dbReference>
<dbReference type="EMBL" id="CH471092">
    <property type="protein sequence ID" value="EAW82831.1"/>
    <property type="molecule type" value="Genomic_DNA"/>
</dbReference>
<dbReference type="EMBL" id="CH471092">
    <property type="protein sequence ID" value="EAW82833.1"/>
    <property type="molecule type" value="Genomic_DNA"/>
</dbReference>
<dbReference type="EMBL" id="CH471092">
    <property type="protein sequence ID" value="EAW82835.1"/>
    <property type="molecule type" value="Genomic_DNA"/>
</dbReference>
<dbReference type="CCDS" id="CCDS10754.1">
    <molecule id="P23975-1"/>
</dbReference>
<dbReference type="CCDS" id="CCDS54011.1">
    <molecule id="P23975-2"/>
</dbReference>
<dbReference type="CCDS" id="CCDS58463.1">
    <molecule id="P23975-3"/>
</dbReference>
<dbReference type="PIR" id="S14278">
    <property type="entry name" value="S14278"/>
</dbReference>
<dbReference type="RefSeq" id="NP_001034.1">
    <molecule id="P23975-1"/>
    <property type="nucleotide sequence ID" value="NM_001043.3"/>
</dbReference>
<dbReference type="RefSeq" id="NP_001165972.1">
    <molecule id="P23975-1"/>
    <property type="nucleotide sequence ID" value="NM_001172501.3"/>
</dbReference>
<dbReference type="RefSeq" id="NP_001165973.1">
    <molecule id="P23975-3"/>
    <property type="nucleotide sequence ID" value="NM_001172502.1"/>
</dbReference>
<dbReference type="RefSeq" id="NP_001165975.1">
    <molecule id="P23975-2"/>
    <property type="nucleotide sequence ID" value="NM_001172504.1"/>
</dbReference>
<dbReference type="RefSeq" id="XP_006721326.1">
    <molecule id="P23975-2"/>
    <property type="nucleotide sequence ID" value="XM_006721263.2"/>
</dbReference>
<dbReference type="RefSeq" id="XP_011521597.1">
    <molecule id="P23975-2"/>
    <property type="nucleotide sequence ID" value="XM_011523295.3"/>
</dbReference>
<dbReference type="RefSeq" id="XP_054169722.1">
    <molecule id="P23975-2"/>
    <property type="nucleotide sequence ID" value="XM_054313747.1"/>
</dbReference>
<dbReference type="RefSeq" id="XP_054169723.1">
    <molecule id="P23975-2"/>
    <property type="nucleotide sequence ID" value="XM_054313748.1"/>
</dbReference>
<dbReference type="PDB" id="8HFE">
    <property type="method" value="EM"/>
    <property type="resolution" value="2.50 A"/>
    <property type="chains" value="A=1-617"/>
</dbReference>
<dbReference type="PDB" id="8HFF">
    <property type="method" value="EM"/>
    <property type="resolution" value="2.86 A"/>
    <property type="chains" value="A=1-617"/>
</dbReference>
<dbReference type="PDB" id="8HFG">
    <property type="method" value="EM"/>
    <property type="resolution" value="3.00 A"/>
    <property type="chains" value="A=1-617"/>
</dbReference>
<dbReference type="PDB" id="8HFI">
    <property type="method" value="EM"/>
    <property type="resolution" value="2.50 A"/>
    <property type="chains" value="A=1-617"/>
</dbReference>
<dbReference type="PDB" id="8HFL">
    <property type="method" value="EM"/>
    <property type="resolution" value="3.00 A"/>
    <property type="chains" value="A=1-617"/>
</dbReference>
<dbReference type="PDB" id="8I3V">
    <property type="method" value="EM"/>
    <property type="resolution" value="2.85 A"/>
    <property type="chains" value="A=1-617"/>
</dbReference>
<dbReference type="PDB" id="8WGR">
    <property type="method" value="EM"/>
    <property type="resolution" value="2.75 A"/>
    <property type="chains" value="A=1-617"/>
</dbReference>
<dbReference type="PDB" id="8WGX">
    <property type="method" value="EM"/>
    <property type="resolution" value="3.47 A"/>
    <property type="chains" value="A=1-617"/>
</dbReference>
<dbReference type="PDB" id="8WTU">
    <property type="method" value="EM"/>
    <property type="resolution" value="2.70 A"/>
    <property type="chains" value="A=52-617"/>
</dbReference>
<dbReference type="PDB" id="8WTV">
    <property type="method" value="EM"/>
    <property type="resolution" value="2.70 A"/>
    <property type="chains" value="A=52-617"/>
</dbReference>
<dbReference type="PDB" id="8WTW">
    <property type="method" value="EM"/>
    <property type="resolution" value="2.80 A"/>
    <property type="chains" value="A=52-617"/>
</dbReference>
<dbReference type="PDB" id="8WTX">
    <property type="method" value="EM"/>
    <property type="resolution" value="2.90 A"/>
    <property type="chains" value="A=52-617"/>
</dbReference>
<dbReference type="PDB" id="8WTY">
    <property type="method" value="EM"/>
    <property type="resolution" value="3.20 A"/>
    <property type="chains" value="A=52-617"/>
</dbReference>
<dbReference type="PDB" id="8XB2">
    <property type="method" value="EM"/>
    <property type="resolution" value="3.04 A"/>
    <property type="chains" value="A=54-617"/>
</dbReference>
<dbReference type="PDB" id="8XB3">
    <property type="method" value="EM"/>
    <property type="resolution" value="2.80 A"/>
    <property type="chains" value="A=54-617"/>
</dbReference>
<dbReference type="PDB" id="8XB4">
    <property type="method" value="EM"/>
    <property type="resolution" value="2.92 A"/>
    <property type="chains" value="A=54-617"/>
</dbReference>
<dbReference type="PDB" id="8Y8Z">
    <property type="method" value="EM"/>
    <property type="resolution" value="3.29 A"/>
    <property type="chains" value="A/E=1-617"/>
</dbReference>
<dbReference type="PDB" id="8Y90">
    <property type="method" value="EM"/>
    <property type="resolution" value="3.15 A"/>
    <property type="chains" value="A/E=1-617"/>
</dbReference>
<dbReference type="PDB" id="8Y91">
    <property type="method" value="EM"/>
    <property type="resolution" value="3.13 A"/>
    <property type="chains" value="A/D=1-617"/>
</dbReference>
<dbReference type="PDB" id="8Y92">
    <property type="method" value="EM"/>
    <property type="resolution" value="3.29 A"/>
    <property type="chains" value="A/B=1-617"/>
</dbReference>
<dbReference type="PDB" id="8Y93">
    <property type="method" value="EM"/>
    <property type="resolution" value="3.00 A"/>
    <property type="chains" value="A/E=1-617"/>
</dbReference>
<dbReference type="PDB" id="8Y94">
    <property type="method" value="EM"/>
    <property type="resolution" value="3.29 A"/>
    <property type="chains" value="A/C=1-617"/>
</dbReference>
<dbReference type="PDB" id="8Y95">
    <property type="method" value="EM"/>
    <property type="resolution" value="3.24 A"/>
    <property type="chains" value="A/D=1-617"/>
</dbReference>
<dbReference type="PDB" id="8YR2">
    <property type="method" value="EM"/>
    <property type="resolution" value="2.89 A"/>
    <property type="chains" value="A/B=1-617"/>
</dbReference>
<dbReference type="PDB" id="8Z1L">
    <property type="method" value="EM"/>
    <property type="resolution" value="3.40 A"/>
    <property type="chains" value="A=1-617"/>
</dbReference>
<dbReference type="PDB" id="8ZOY">
    <property type="method" value="EM"/>
    <property type="resolution" value="2.50 A"/>
    <property type="chains" value="A=47-617"/>
</dbReference>
<dbReference type="PDB" id="8ZP1">
    <property type="method" value="EM"/>
    <property type="resolution" value="2.50 A"/>
    <property type="chains" value="A=47-617"/>
</dbReference>
<dbReference type="PDB" id="8ZP2">
    <property type="method" value="EM"/>
    <property type="resolution" value="2.40 A"/>
    <property type="chains" value="A=47-617"/>
</dbReference>
<dbReference type="PDB" id="8ZPB">
    <property type="method" value="EM"/>
    <property type="resolution" value="2.60 A"/>
    <property type="chains" value="A=47-617"/>
</dbReference>
<dbReference type="PDBsum" id="8HFE"/>
<dbReference type="PDBsum" id="8HFF"/>
<dbReference type="PDBsum" id="8HFG"/>
<dbReference type="PDBsum" id="8HFI"/>
<dbReference type="PDBsum" id="8HFL"/>
<dbReference type="PDBsum" id="8I3V"/>
<dbReference type="PDBsum" id="8WGR"/>
<dbReference type="PDBsum" id="8WGX"/>
<dbReference type="PDBsum" id="8WTU"/>
<dbReference type="PDBsum" id="8WTV"/>
<dbReference type="PDBsum" id="8WTW"/>
<dbReference type="PDBsum" id="8WTX"/>
<dbReference type="PDBsum" id="8WTY"/>
<dbReference type="PDBsum" id="8XB2"/>
<dbReference type="PDBsum" id="8XB3"/>
<dbReference type="PDBsum" id="8XB4"/>
<dbReference type="PDBsum" id="8Y8Z"/>
<dbReference type="PDBsum" id="8Y90"/>
<dbReference type="PDBsum" id="8Y91"/>
<dbReference type="PDBsum" id="8Y92"/>
<dbReference type="PDBsum" id="8Y93"/>
<dbReference type="PDBsum" id="8Y94"/>
<dbReference type="PDBsum" id="8Y95"/>
<dbReference type="PDBsum" id="8YR2"/>
<dbReference type="PDBsum" id="8Z1L"/>
<dbReference type="PDBsum" id="8ZOY"/>
<dbReference type="PDBsum" id="8ZP1"/>
<dbReference type="PDBsum" id="8ZP2"/>
<dbReference type="PDBsum" id="8ZPB"/>
<dbReference type="EMDB" id="EMD-34718"/>
<dbReference type="EMDB" id="EMD-34719"/>
<dbReference type="EMDB" id="EMD-34720"/>
<dbReference type="EMDB" id="EMD-34721"/>
<dbReference type="EMDB" id="EMD-34722"/>
<dbReference type="EMDB" id="EMD-35157"/>
<dbReference type="EMDB" id="EMD-37515"/>
<dbReference type="EMDB" id="EMD-37520"/>
<dbReference type="EMDB" id="EMD-37842"/>
<dbReference type="EMDB" id="EMD-37843"/>
<dbReference type="EMDB" id="EMD-37844"/>
<dbReference type="EMDB" id="EMD-37845"/>
<dbReference type="EMDB" id="EMD-37846"/>
<dbReference type="EMDB" id="EMD-38208"/>
<dbReference type="EMDB" id="EMD-38209"/>
<dbReference type="EMDB" id="EMD-38210"/>
<dbReference type="EMDB" id="EMD-39064"/>
<dbReference type="EMDB" id="EMD-39065"/>
<dbReference type="EMDB" id="EMD-39066"/>
<dbReference type="EMDB" id="EMD-39067"/>
<dbReference type="EMDB" id="EMD-39068"/>
<dbReference type="EMDB" id="EMD-39069"/>
<dbReference type="EMDB" id="EMD-39070"/>
<dbReference type="EMDB" id="EMD-39533"/>
<dbReference type="EMDB" id="EMD-39729"/>
<dbReference type="EMDB" id="EMD-60322"/>
<dbReference type="EMDB" id="EMD-60324"/>
<dbReference type="EMDB" id="EMD-60325"/>
<dbReference type="EMDB" id="EMD-60331"/>
<dbReference type="SMR" id="P23975"/>
<dbReference type="BioGRID" id="112421">
    <property type="interactions" value="3"/>
</dbReference>
<dbReference type="CORUM" id="P23975"/>
<dbReference type="FunCoup" id="P23975">
    <property type="interactions" value="105"/>
</dbReference>
<dbReference type="MINT" id="P23975"/>
<dbReference type="STRING" id="9606.ENSP00000219833"/>
<dbReference type="BindingDB" id="P23975"/>
<dbReference type="ChEMBL" id="CHEMBL222"/>
<dbReference type="DrugBank" id="DB00316">
    <property type="generic name" value="Acetaminophen"/>
</dbReference>
<dbReference type="DrugBank" id="DB04836">
    <property type="generic name" value="Amineptine"/>
</dbReference>
<dbReference type="DrugBank" id="DB05964">
    <property type="generic name" value="Amitifadine"/>
</dbReference>
<dbReference type="DrugBank" id="DB00321">
    <property type="generic name" value="Amitriptyline"/>
</dbReference>
<dbReference type="DrugBank" id="DB00543">
    <property type="generic name" value="Amoxapine"/>
</dbReference>
<dbReference type="DrugBank" id="DB00182">
    <property type="generic name" value="Amphetamine"/>
</dbReference>
<dbReference type="DrugBank" id="DB15348">
    <property type="generic name" value="Ampreloxetine"/>
</dbReference>
<dbReference type="DrugBank" id="DB00289">
    <property type="generic name" value="Atomoxetine"/>
</dbReference>
<dbReference type="DrugBank" id="DB00245">
    <property type="generic name" value="Benzatropine"/>
</dbReference>
<dbReference type="DrugBank" id="DB04889">
    <property type="generic name" value="Bicifadine"/>
</dbReference>
<dbReference type="DrugBank" id="DB01156">
    <property type="generic name" value="Bupropion"/>
</dbReference>
<dbReference type="DrugBank" id="DB01114">
    <property type="generic name" value="Chlorpheniramine"/>
</dbReference>
<dbReference type="DrugBank" id="DB01242">
    <property type="generic name" value="Clomipramine"/>
</dbReference>
<dbReference type="DrugBank" id="DB00907">
    <property type="generic name" value="Cocaine"/>
</dbReference>
<dbReference type="DrugBank" id="DB05688">
    <property type="generic name" value="CRx-119"/>
</dbReference>
<dbReference type="DrugBank" id="DB00924">
    <property type="generic name" value="Cyclobenzaprine"/>
</dbReference>
<dbReference type="DrugBank" id="DB12305">
    <property type="generic name" value="Dasotraline"/>
</dbReference>
<dbReference type="DrugBank" id="DB05642">
    <property type="generic name" value="DDP-225"/>
</dbReference>
<dbReference type="DrugBank" id="DB04840">
    <property type="generic name" value="Debrisoquine"/>
</dbReference>
<dbReference type="DrugBank" id="DB01151">
    <property type="generic name" value="Desipramine"/>
</dbReference>
<dbReference type="DrugBank" id="DB06700">
    <property type="generic name" value="Desvenlafaxine"/>
</dbReference>
<dbReference type="DrugBank" id="DB06701">
    <property type="generic name" value="Dexmethylphenidate"/>
</dbReference>
<dbReference type="DrugBank" id="DB01576">
    <property type="generic name" value="Dextroamphetamine"/>
</dbReference>
<dbReference type="DrugBank" id="DB00514">
    <property type="generic name" value="Dextromethorphan"/>
</dbReference>
<dbReference type="DrugBank" id="DB00937">
    <property type="generic name" value="Diethylpropion"/>
</dbReference>
<dbReference type="DrugBank" id="DB00988">
    <property type="generic name" value="Dopamine"/>
</dbReference>
<dbReference type="DrugBank" id="DB09167">
    <property type="generic name" value="Dosulepin"/>
</dbReference>
<dbReference type="DrugBank" id="DB01142">
    <property type="generic name" value="Doxepin"/>
</dbReference>
<dbReference type="DrugBank" id="DB06262">
    <property type="generic name" value="Droxidopa"/>
</dbReference>
<dbReference type="DrugBank" id="DB00476">
    <property type="generic name" value="Duloxetine"/>
</dbReference>
<dbReference type="DrugBank" id="DB01363">
    <property type="generic name" value="Ephedra sinica root"/>
</dbReference>
<dbReference type="DrugBank" id="DB01364">
    <property type="generic name" value="Ephedrine"/>
</dbReference>
<dbReference type="DrugBank" id="DB01175">
    <property type="generic name" value="Escitalopram"/>
</dbReference>
<dbReference type="DrugBank" id="DB12395">
    <property type="generic name" value="Esreboxetine"/>
</dbReference>
<dbReference type="DrugBank" id="DB09194">
    <property type="generic name" value="Etoperidone"/>
</dbReference>
<dbReference type="DrugBank" id="DB01381">
    <property type="generic name" value="Ginkgo biloba"/>
</dbReference>
<dbReference type="DrugBank" id="DB00226">
    <property type="generic name" value="Guanadrel"/>
</dbReference>
<dbReference type="DrugBank" id="DB01170">
    <property type="generic name" value="Guanethidine"/>
</dbReference>
<dbReference type="DrugBank" id="DB00458">
    <property type="generic name" value="Imipramine"/>
</dbReference>
<dbReference type="DrugBank" id="DB06704">
    <property type="generic name" value="Iobenguane"/>
</dbReference>
<dbReference type="DrugBank" id="DB09546">
    <property type="generic name" value="Iobenguane sulfate I-123"/>
</dbReference>
<dbReference type="DrugBank" id="DB01221">
    <property type="generic name" value="Ketamine"/>
</dbReference>
<dbReference type="DrugBank" id="DB08918">
    <property type="generic name" value="Levomilnacipran"/>
</dbReference>
<dbReference type="DrugBank" id="DB00408">
    <property type="generic name" value="Loxapine"/>
</dbReference>
<dbReference type="DrugBank" id="DB00934">
    <property type="generic name" value="Maprotiline"/>
</dbReference>
<dbReference type="DrugBank" id="DB00579">
    <property type="generic name" value="Mazindol"/>
</dbReference>
<dbReference type="DrugBank" id="DB00454">
    <property type="generic name" value="Meperidine"/>
</dbReference>
<dbReference type="DrugBank" id="DB01577">
    <property type="generic name" value="Metamfetamine"/>
</dbReference>
<dbReference type="DrugBank" id="DB00422">
    <property type="generic name" value="Methylphenidate"/>
</dbReference>
<dbReference type="DrugBank" id="DB06148">
    <property type="generic name" value="Mianserin"/>
</dbReference>
<dbReference type="DrugBank" id="DB01454">
    <property type="generic name" value="Midomafetamine"/>
</dbReference>
<dbReference type="DrugBank" id="DB04896">
    <property type="generic name" value="Milnacipran"/>
</dbReference>
<dbReference type="DrugBank" id="DB01442">
    <property type="generic name" value="MMDA"/>
</dbReference>
<dbReference type="DrugBank" id="DB01149">
    <property type="generic name" value="Nefazodone"/>
</dbReference>
<dbReference type="DrugBank" id="DB13931">
    <property type="generic name" value="Netarsudil"/>
</dbReference>
<dbReference type="DrugBank" id="DB09186">
    <property type="generic name" value="Nisoxetine"/>
</dbReference>
<dbReference type="DrugBank" id="DB04821">
    <property type="generic name" value="Nomifensine"/>
</dbReference>
<dbReference type="DrugBank" id="DB00368">
    <property type="generic name" value="Norepinephrine"/>
</dbReference>
<dbReference type="DrugBank" id="DB00540">
    <property type="generic name" value="Nortriptyline"/>
</dbReference>
<dbReference type="DrugBank" id="DB05805">
    <property type="generic name" value="NS-2359"/>
</dbReference>
<dbReference type="DrugBank" id="DB01173">
    <property type="generic name" value="Orphenadrine"/>
</dbReference>
<dbReference type="DrugBank" id="DB00715">
    <property type="generic name" value="Paroxetine"/>
</dbReference>
<dbReference type="DrugBank" id="DB01579">
    <property type="generic name" value="Phendimetrazine"/>
</dbReference>
<dbReference type="DrugBank" id="DB00830">
    <property type="generic name" value="Phenmetrazine"/>
</dbReference>
<dbReference type="DrugBank" id="DB00191">
    <property type="generic name" value="Phentermine"/>
</dbReference>
<dbReference type="DrugBank" id="DB00721">
    <property type="generic name" value="Procaine"/>
</dbReference>
<dbReference type="DrugBank" id="DB00344">
    <property type="generic name" value="Protriptyline"/>
</dbReference>
<dbReference type="DrugBank" id="DB00852">
    <property type="generic name" value="Pseudoephedrine"/>
</dbReference>
<dbReference type="DrugBank" id="DB11790">
    <property type="generic name" value="Radafaxine"/>
</dbReference>
<dbReference type="DrugBank" id="DB09363">
    <property type="generic name" value="Rauwolfia serpentina root"/>
</dbReference>
<dbReference type="DrugBank" id="DB00234">
    <property type="generic name" value="Reboxetine"/>
</dbReference>
<dbReference type="DrugBank" id="DB06731">
    <property type="generic name" value="Seproxetine"/>
</dbReference>
<dbReference type="DrugBank" id="DB16629">
    <property type="generic name" value="Serdexmethylphenidate"/>
</dbReference>
<dbReference type="DrugBank" id="DB01104">
    <property type="generic name" value="Sertraline"/>
</dbReference>
<dbReference type="DrugBank" id="DB01105">
    <property type="generic name" value="Sibutramine"/>
</dbReference>
<dbReference type="DrugBank" id="DB14754">
    <property type="generic name" value="Solriamfetol"/>
</dbReference>
<dbReference type="DrugBank" id="DB06204">
    <property type="generic name" value="Tapentadol"/>
</dbReference>
<dbReference type="DrugBank" id="DB01509">
    <property type="generic name" value="Tenamfetamine"/>
</dbReference>
<dbReference type="DrugBank" id="DB06156">
    <property type="generic name" value="Tesofensine"/>
</dbReference>
<dbReference type="DrugBank" id="DB00193">
    <property type="generic name" value="Tramadol"/>
</dbReference>
<dbReference type="DrugBank" id="DB00726">
    <property type="generic name" value="Trimipramine"/>
</dbReference>
<dbReference type="DrugBank" id="DB06333">
    <property type="generic name" value="Trodusquemine"/>
</dbReference>
<dbReference type="DrugBank" id="DB00285">
    <property type="generic name" value="Venlafaxine"/>
</dbReference>
<dbReference type="DrugBank" id="DB09185">
    <property type="generic name" value="Viloxazine"/>
</dbReference>
<dbReference type="DrugBank" id="DB09068">
    <property type="generic name" value="Vortioxetine"/>
</dbReference>
<dbReference type="DrugBank" id="DB05012">
    <property type="generic name" value="XEN-2174"/>
</dbReference>
<dbReference type="DrugBank" id="DB09225">
    <property type="generic name" value="Zotepine"/>
</dbReference>
<dbReference type="DrugCentral" id="P23975"/>
<dbReference type="GuidetoPHARMACOLOGY" id="926"/>
<dbReference type="TCDB" id="2.A.22.1.2">
    <property type="family name" value="the neurotransmitter:sodium symporter (nss) family"/>
</dbReference>
<dbReference type="GlyCosmos" id="P23975">
    <property type="glycosylation" value="3 sites, No reported glycans"/>
</dbReference>
<dbReference type="GlyGen" id="P23975">
    <property type="glycosylation" value="4 sites"/>
</dbReference>
<dbReference type="iPTMnet" id="P23975"/>
<dbReference type="PhosphoSitePlus" id="P23975"/>
<dbReference type="BioMuta" id="SLC6A2"/>
<dbReference type="DMDM" id="128616"/>
<dbReference type="jPOST" id="P23975"/>
<dbReference type="MassIVE" id="P23975"/>
<dbReference type="PaxDb" id="9606-ENSP00000219833"/>
<dbReference type="PeptideAtlas" id="P23975"/>
<dbReference type="ProteomicsDB" id="5409"/>
<dbReference type="ProteomicsDB" id="54172">
    <molecule id="P23975-1"/>
</dbReference>
<dbReference type="ProteomicsDB" id="77077"/>
<dbReference type="Antibodypedia" id="1363">
    <property type="antibodies" value="152 antibodies from 29 providers"/>
</dbReference>
<dbReference type="DNASU" id="6530"/>
<dbReference type="Ensembl" id="ENST00000219833.13">
    <molecule id="P23975-2"/>
    <property type="protein sequence ID" value="ENSP00000219833.8"/>
    <property type="gene ID" value="ENSG00000103546.19"/>
</dbReference>
<dbReference type="Ensembl" id="ENST00000379906.6">
    <molecule id="P23975-1"/>
    <property type="protein sequence ID" value="ENSP00000369237.2"/>
    <property type="gene ID" value="ENSG00000103546.19"/>
</dbReference>
<dbReference type="Ensembl" id="ENST00000567238.1">
    <molecule id="P23975-3"/>
    <property type="protein sequence ID" value="ENSP00000457375.1"/>
    <property type="gene ID" value="ENSG00000103546.19"/>
</dbReference>
<dbReference type="Ensembl" id="ENST00000568943.6">
    <molecule id="P23975-1"/>
    <property type="protein sequence ID" value="ENSP00000457473.1"/>
    <property type="gene ID" value="ENSG00000103546.19"/>
</dbReference>
<dbReference type="GeneID" id="6530"/>
<dbReference type="KEGG" id="hsa:6530"/>
<dbReference type="MANE-Select" id="ENST00000568943.6">
    <property type="protein sequence ID" value="ENSP00000457473.1"/>
    <property type="RefSeq nucleotide sequence ID" value="NM_001172501.3"/>
    <property type="RefSeq protein sequence ID" value="NP_001165972.1"/>
</dbReference>
<dbReference type="UCSC" id="uc002eif.4">
    <molecule id="P23975-1"/>
    <property type="organism name" value="human"/>
</dbReference>
<dbReference type="AGR" id="HGNC:11048"/>
<dbReference type="CTD" id="6530"/>
<dbReference type="DisGeNET" id="6530"/>
<dbReference type="GeneCards" id="SLC6A2"/>
<dbReference type="HGNC" id="HGNC:11048">
    <property type="gene designation" value="SLC6A2"/>
</dbReference>
<dbReference type="HPA" id="ENSG00000103546">
    <property type="expression patterns" value="Tissue enhanced (adrenal gland, placenta, skin, testis)"/>
</dbReference>
<dbReference type="MalaCards" id="SLC6A2"/>
<dbReference type="MIM" id="163970">
    <property type="type" value="gene"/>
</dbReference>
<dbReference type="MIM" id="604715">
    <property type="type" value="phenotype"/>
</dbReference>
<dbReference type="neXtProt" id="NX_P23975"/>
<dbReference type="OpenTargets" id="ENSG00000103546"/>
<dbReference type="Orphanet" id="443236">
    <property type="disease" value="Postural orthostatic tachycardia syndrome due to NET deficiency"/>
</dbReference>
<dbReference type="PharmGKB" id="PA310"/>
<dbReference type="VEuPathDB" id="HostDB:ENSG00000103546"/>
<dbReference type="eggNOG" id="KOG3659">
    <property type="taxonomic scope" value="Eukaryota"/>
</dbReference>
<dbReference type="GeneTree" id="ENSGT00940000158960"/>
<dbReference type="HOGENOM" id="CLU_006855_9_5_1"/>
<dbReference type="InParanoid" id="P23975"/>
<dbReference type="OMA" id="TIWFVSR"/>
<dbReference type="OrthoDB" id="6581954at2759"/>
<dbReference type="PAN-GO" id="P23975">
    <property type="GO annotations" value="9 GO annotations based on evolutionary models"/>
</dbReference>
<dbReference type="PhylomeDB" id="P23975"/>
<dbReference type="TreeFam" id="TF343812"/>
<dbReference type="PathwayCommons" id="P23975"/>
<dbReference type="Reactome" id="R-HSA-442660">
    <property type="pathway name" value="Na+/Cl- dependent neurotransmitter transporters"/>
</dbReference>
<dbReference type="Reactome" id="R-HSA-5619109">
    <property type="pathway name" value="Defective SLC6A2 causes orthostatic intolerance (OI)"/>
</dbReference>
<dbReference type="SignaLink" id="P23975"/>
<dbReference type="SIGNOR" id="P23975"/>
<dbReference type="BioGRID-ORCS" id="6530">
    <property type="hits" value="14 hits in 1152 CRISPR screens"/>
</dbReference>
<dbReference type="ChiTaRS" id="SLC6A2">
    <property type="organism name" value="human"/>
</dbReference>
<dbReference type="GeneWiki" id="Norepinephrine_transporter"/>
<dbReference type="GenomeRNAi" id="6530"/>
<dbReference type="Pharos" id="P23975">
    <property type="development level" value="Tclin"/>
</dbReference>
<dbReference type="PRO" id="PR:P23975"/>
<dbReference type="Proteomes" id="UP000005640">
    <property type="component" value="Chromosome 16"/>
</dbReference>
<dbReference type="RNAct" id="P23975">
    <property type="molecule type" value="protein"/>
</dbReference>
<dbReference type="Bgee" id="ENSG00000103546">
    <property type="expression patterns" value="Expressed in placenta and 97 other cell types or tissues"/>
</dbReference>
<dbReference type="ExpressionAtlas" id="P23975">
    <property type="expression patterns" value="baseline and differential"/>
</dbReference>
<dbReference type="GO" id="GO:0030424">
    <property type="term" value="C:axon"/>
    <property type="evidence" value="ECO:0000318"/>
    <property type="project" value="GO_Central"/>
</dbReference>
<dbReference type="GO" id="GO:0009986">
    <property type="term" value="C:cell surface"/>
    <property type="evidence" value="ECO:0007669"/>
    <property type="project" value="Ensembl"/>
</dbReference>
<dbReference type="GO" id="GO:0016020">
    <property type="term" value="C:membrane"/>
    <property type="evidence" value="ECO:0000304"/>
    <property type="project" value="ProtInc"/>
</dbReference>
<dbReference type="GO" id="GO:0032809">
    <property type="term" value="C:neuronal cell body membrane"/>
    <property type="evidence" value="ECO:0000318"/>
    <property type="project" value="GO_Central"/>
</dbReference>
<dbReference type="GO" id="GO:0005886">
    <property type="term" value="C:plasma membrane"/>
    <property type="evidence" value="ECO:0000314"/>
    <property type="project" value="UniProtKB"/>
</dbReference>
<dbReference type="GO" id="GO:0042734">
    <property type="term" value="C:presynaptic membrane"/>
    <property type="evidence" value="ECO:0000318"/>
    <property type="project" value="GO_Central"/>
</dbReference>
<dbReference type="GO" id="GO:0030672">
    <property type="term" value="C:synaptic vesicle membrane"/>
    <property type="evidence" value="ECO:0007669"/>
    <property type="project" value="Ensembl"/>
</dbReference>
<dbReference type="GO" id="GO:0003779">
    <property type="term" value="F:actin binding"/>
    <property type="evidence" value="ECO:0000353"/>
    <property type="project" value="ARUK-UCL"/>
</dbReference>
<dbReference type="GO" id="GO:0043014">
    <property type="term" value="F:alpha-tubulin binding"/>
    <property type="evidence" value="ECO:0007669"/>
    <property type="project" value="Ensembl"/>
</dbReference>
<dbReference type="GO" id="GO:0048487">
    <property type="term" value="F:beta-tubulin binding"/>
    <property type="evidence" value="ECO:0007669"/>
    <property type="project" value="Ensembl"/>
</dbReference>
<dbReference type="GO" id="GO:0005330">
    <property type="term" value="F:dopamine:sodium symporter activity"/>
    <property type="evidence" value="ECO:0000314"/>
    <property type="project" value="UniProtKB"/>
</dbReference>
<dbReference type="GO" id="GO:0046872">
    <property type="term" value="F:metal ion binding"/>
    <property type="evidence" value="ECO:0007669"/>
    <property type="project" value="UniProtKB-KW"/>
</dbReference>
<dbReference type="GO" id="GO:0008504">
    <property type="term" value="F:monoamine transmembrane transporter activity"/>
    <property type="evidence" value="ECO:0000314"/>
    <property type="project" value="MGI"/>
</dbReference>
<dbReference type="GO" id="GO:0005326">
    <property type="term" value="F:neurotransmitter transmembrane transporter activity"/>
    <property type="evidence" value="ECO:0000250"/>
    <property type="project" value="ARUK-UCL"/>
</dbReference>
<dbReference type="GO" id="GO:0005328">
    <property type="term" value="F:neurotransmitter:sodium symporter activity"/>
    <property type="evidence" value="ECO:0007669"/>
    <property type="project" value="InterPro"/>
</dbReference>
<dbReference type="GO" id="GO:0005334">
    <property type="term" value="F:norepinephrine:sodium symporter activity"/>
    <property type="evidence" value="ECO:0000314"/>
    <property type="project" value="UniProtKB"/>
</dbReference>
<dbReference type="GO" id="GO:0006865">
    <property type="term" value="P:amino acid transport"/>
    <property type="evidence" value="ECO:0000318"/>
    <property type="project" value="GO_Central"/>
</dbReference>
<dbReference type="GO" id="GO:0007268">
    <property type="term" value="P:chemical synaptic transmission"/>
    <property type="evidence" value="ECO:0000304"/>
    <property type="project" value="ProtInc"/>
</dbReference>
<dbReference type="GO" id="GO:0051583">
    <property type="term" value="P:dopamine uptake involved in synaptic transmission"/>
    <property type="evidence" value="ECO:0000318"/>
    <property type="project" value="GO_Central"/>
</dbReference>
<dbReference type="GO" id="GO:0015844">
    <property type="term" value="P:monoamine transport"/>
    <property type="evidence" value="ECO:0000314"/>
    <property type="project" value="MGI"/>
</dbReference>
<dbReference type="GO" id="GO:0070050">
    <property type="term" value="P:neuron cellular homeostasis"/>
    <property type="evidence" value="ECO:0000304"/>
    <property type="project" value="ARUK-UCL"/>
</dbReference>
<dbReference type="GO" id="GO:0006836">
    <property type="term" value="P:neurotransmitter transport"/>
    <property type="evidence" value="ECO:0000250"/>
    <property type="project" value="ARUK-UCL"/>
</dbReference>
<dbReference type="GO" id="GO:0015874">
    <property type="term" value="P:norepinephrine transport"/>
    <property type="evidence" value="ECO:0000318"/>
    <property type="project" value="GO_Central"/>
</dbReference>
<dbReference type="GO" id="GO:0051620">
    <property type="term" value="P:norepinephrine uptake"/>
    <property type="evidence" value="ECO:0000250"/>
    <property type="project" value="ARUK-UCL"/>
</dbReference>
<dbReference type="GO" id="GO:0048265">
    <property type="term" value="P:response to pain"/>
    <property type="evidence" value="ECO:0007669"/>
    <property type="project" value="Ensembl"/>
</dbReference>
<dbReference type="GO" id="GO:0009410">
    <property type="term" value="P:response to xenobiotic stimulus"/>
    <property type="evidence" value="ECO:0007669"/>
    <property type="project" value="Ensembl"/>
</dbReference>
<dbReference type="GO" id="GO:0035725">
    <property type="term" value="P:sodium ion transmembrane transport"/>
    <property type="evidence" value="ECO:0000318"/>
    <property type="project" value="GO_Central"/>
</dbReference>
<dbReference type="CDD" id="cd11512">
    <property type="entry name" value="SLC6sbd_NET"/>
    <property type="match status" value="1"/>
</dbReference>
<dbReference type="InterPro" id="IPR000175">
    <property type="entry name" value="Na/ntran_symport"/>
</dbReference>
<dbReference type="InterPro" id="IPR002435">
    <property type="entry name" value="Na/ntran_symport_noradrenaline"/>
</dbReference>
<dbReference type="InterPro" id="IPR037272">
    <property type="entry name" value="SNS_sf"/>
</dbReference>
<dbReference type="PANTHER" id="PTHR11616:SF320">
    <property type="entry name" value="SODIUM-DEPENDENT NORADRENALINE TRANSPORTER"/>
    <property type="match status" value="1"/>
</dbReference>
<dbReference type="PANTHER" id="PTHR11616">
    <property type="entry name" value="SODIUM/CHLORIDE DEPENDENT TRANSPORTER"/>
    <property type="match status" value="1"/>
</dbReference>
<dbReference type="Pfam" id="PF00209">
    <property type="entry name" value="SNF"/>
    <property type="match status" value="1"/>
</dbReference>
<dbReference type="PRINTS" id="PR00176">
    <property type="entry name" value="NANEUSMPORT"/>
</dbReference>
<dbReference type="PRINTS" id="PR01201">
    <property type="entry name" value="NORTRANSPORT"/>
</dbReference>
<dbReference type="SUPFAM" id="SSF161070">
    <property type="entry name" value="SNF-like"/>
    <property type="match status" value="1"/>
</dbReference>
<dbReference type="PROSITE" id="PS00610">
    <property type="entry name" value="NA_NEUROTRAN_SYMP_1"/>
    <property type="match status" value="1"/>
</dbReference>
<dbReference type="PROSITE" id="PS00754">
    <property type="entry name" value="NA_NEUROTRAN_SYMP_2"/>
    <property type="match status" value="1"/>
</dbReference>
<dbReference type="PROSITE" id="PS50267">
    <property type="entry name" value="NA_NEUROTRAN_SYMP_3"/>
    <property type="match status" value="1"/>
</dbReference>
<proteinExistence type="evidence at protein level"/>
<gene>
    <name evidence="18" type="primary">SLC6A2</name>
    <name type="synonym">NAT1</name>
    <name type="synonym">NET1</name>
    <name type="synonym">SLC6A5</name>
</gene>
<feature type="chain" id="PRO_0000214748" description="Sodium-dependent noradrenaline transporter">
    <location>
        <begin position="1"/>
        <end position="617"/>
    </location>
</feature>
<feature type="topological domain" description="Cytoplasmic" evidence="2">
    <location>
        <begin position="1"/>
        <end position="62"/>
    </location>
</feature>
<feature type="transmembrane region" description="Helical; Name=1" evidence="2">
    <location>
        <begin position="63"/>
        <end position="88"/>
    </location>
</feature>
<feature type="topological domain" description="Extracellular" evidence="2">
    <location>
        <begin position="89"/>
        <end position="92"/>
    </location>
</feature>
<feature type="transmembrane region" description="Helical; Name=2" evidence="2">
    <location>
        <begin position="93"/>
        <end position="116"/>
    </location>
</feature>
<feature type="topological domain" description="Cytoplasmic" evidence="2">
    <location>
        <begin position="117"/>
        <end position="135"/>
    </location>
</feature>
<feature type="transmembrane region" description="Helical; Name=3" evidence="2">
    <location>
        <begin position="136"/>
        <end position="166"/>
    </location>
</feature>
<feature type="topological domain" description="Extracellular" evidence="2">
    <location>
        <begin position="167"/>
        <end position="233"/>
    </location>
</feature>
<feature type="transmembrane region" description="Helical; Name=4" evidence="2">
    <location>
        <begin position="234"/>
        <end position="254"/>
    </location>
</feature>
<feature type="topological domain" description="Cytoplasmic" evidence="2">
    <location>
        <begin position="255"/>
        <end position="257"/>
    </location>
</feature>
<feature type="transmembrane region" description="Helical; Name=5" evidence="2">
    <location>
        <begin position="258"/>
        <end position="282"/>
    </location>
</feature>
<feature type="topological domain" description="Extracellular" evidence="2">
    <location>
        <begin position="283"/>
        <end position="306"/>
    </location>
</feature>
<feature type="transmembrane region" description="Helical; Name=6" evidence="2">
    <location>
        <begin position="307"/>
        <end position="332"/>
    </location>
</feature>
<feature type="topological domain" description="Cytoplasmic" evidence="2">
    <location>
        <begin position="333"/>
        <end position="338"/>
    </location>
</feature>
<feature type="transmembrane region" description="Helical; Name=7" evidence="2">
    <location>
        <begin position="339"/>
        <end position="362"/>
    </location>
</feature>
<feature type="topological domain" description="Extracellular" evidence="2">
    <location>
        <begin position="363"/>
        <end position="402"/>
    </location>
</feature>
<feature type="transmembrane region" description="Helical; Name=8" evidence="2">
    <location>
        <begin position="403"/>
        <end position="428"/>
    </location>
</feature>
<feature type="topological domain" description="Cytoplasmic" evidence="2">
    <location>
        <begin position="429"/>
        <end position="443"/>
    </location>
</feature>
<feature type="transmembrane region" description="Helical; Name=9" evidence="2">
    <location>
        <begin position="444"/>
        <end position="464"/>
    </location>
</feature>
<feature type="topological domain" description="Extracellular" evidence="2">
    <location>
        <position position="465"/>
    </location>
</feature>
<feature type="transmembrane region" description="Helical; Name=10" evidence="2">
    <location>
        <begin position="466"/>
        <end position="492"/>
    </location>
</feature>
<feature type="topological domain" description="Cytoplasmic" evidence="2">
    <location>
        <begin position="493"/>
        <end position="522"/>
    </location>
</feature>
<feature type="transmembrane region" description="Helical; Name=11" evidence="2">
    <location>
        <begin position="523"/>
        <end position="545"/>
    </location>
</feature>
<feature type="topological domain" description="Extracellular" evidence="2">
    <location>
        <begin position="546"/>
        <end position="548"/>
    </location>
</feature>
<feature type="transmembrane region" description="Helical; Name=12" evidence="2">
    <location>
        <begin position="549"/>
        <end position="569"/>
    </location>
</feature>
<feature type="topological domain" description="Cytoplasmic" evidence="2">
    <location>
        <begin position="570"/>
        <end position="617"/>
    </location>
</feature>
<feature type="region of interest" description="Disordered" evidence="4">
    <location>
        <begin position="1"/>
        <end position="23"/>
    </location>
</feature>
<feature type="compositionally biased region" description="Polar residues" evidence="4">
    <location>
        <begin position="8"/>
        <end position="17"/>
    </location>
</feature>
<feature type="binding site" evidence="10 34">
    <location>
        <position position="71"/>
    </location>
    <ligand>
        <name>Na(+)</name>
        <dbReference type="ChEBI" id="CHEBI:29101"/>
        <label>1</label>
    </ligand>
</feature>
<feature type="binding site" evidence="10 33 34">
    <location>
        <position position="73"/>
    </location>
    <ligand>
        <name>Na(+)</name>
        <dbReference type="ChEBI" id="CHEBI:29101"/>
        <label>2</label>
    </ligand>
</feature>
<feature type="binding site" evidence="10 34">
    <location>
        <position position="74"/>
    </location>
    <ligand>
        <name>Na(+)</name>
        <dbReference type="ChEBI" id="CHEBI:29101"/>
        <label>1</label>
    </ligand>
</feature>
<feature type="binding site" evidence="10 11 20 33">
    <location>
        <position position="75"/>
    </location>
    <ligand>
        <name>(R)-noradrenaline</name>
        <dbReference type="ChEBI" id="CHEBI:72587"/>
        <label>1</label>
    </ligand>
</feature>
<feature type="binding site" evidence="11 20">
    <location>
        <position position="75"/>
    </location>
    <ligand>
        <name>dopamine</name>
        <dbReference type="ChEBI" id="CHEBI:59905"/>
        <label>1</label>
    </ligand>
</feature>
<feature type="binding site" evidence="10 33 34">
    <location>
        <position position="78"/>
    </location>
    <ligand>
        <name>Na(+)</name>
        <dbReference type="ChEBI" id="CHEBI:29101"/>
        <label>2</label>
    </ligand>
</feature>
<feature type="binding site" evidence="11 20">
    <location>
        <position position="87"/>
    </location>
    <ligand>
        <name>(R)-noradrenaline</name>
        <dbReference type="ChEBI" id="CHEBI:72587"/>
        <label>2</label>
    </ligand>
</feature>
<feature type="binding site" evidence="11 20">
    <location>
        <position position="88"/>
    </location>
    <ligand>
        <name>(R)-noradrenaline</name>
        <dbReference type="ChEBI" id="CHEBI:72587"/>
        <label>2</label>
    </ligand>
</feature>
<feature type="binding site" evidence="10 11 20 33">
    <location>
        <position position="145"/>
    </location>
    <ligand>
        <name>(R)-noradrenaline</name>
        <dbReference type="ChEBI" id="CHEBI:72587"/>
        <label>1</label>
    </ligand>
</feature>
<feature type="binding site" evidence="11 20">
    <location>
        <position position="145"/>
    </location>
    <ligand>
        <name>dopamine</name>
        <dbReference type="ChEBI" id="CHEBI:59905"/>
        <label>1</label>
    </ligand>
</feature>
<feature type="binding site" evidence="10 33">
    <location>
        <position position="149"/>
    </location>
    <ligand>
        <name>(R)-noradrenaline</name>
        <dbReference type="ChEBI" id="CHEBI:72587"/>
        <label>1</label>
    </ligand>
</feature>
<feature type="binding site" evidence="11 20">
    <location>
        <position position="317"/>
    </location>
    <ligand>
        <name>(R)-noradrenaline</name>
        <dbReference type="ChEBI" id="CHEBI:72587"/>
        <label>1</label>
    </ligand>
</feature>
<feature type="binding site" evidence="11 20">
    <location>
        <position position="317"/>
    </location>
    <ligand>
        <name>dopamine</name>
        <dbReference type="ChEBI" id="CHEBI:59905"/>
        <label>1</label>
    </ligand>
</feature>
<feature type="binding site" evidence="10 33 34">
    <location>
        <position position="318"/>
    </location>
    <ligand>
        <name>Na(+)</name>
        <dbReference type="ChEBI" id="CHEBI:29101"/>
        <label>2</label>
    </ligand>
</feature>
<feature type="binding site" evidence="10 33">
    <location>
        <position position="350"/>
    </location>
    <ligand>
        <name>Na(+)</name>
        <dbReference type="ChEBI" id="CHEBI:29101"/>
        <label>2</label>
    </ligand>
</feature>
<feature type="binding site" evidence="11 20">
    <location>
        <position position="382"/>
    </location>
    <ligand>
        <name>(R)-noradrenaline</name>
        <dbReference type="ChEBI" id="CHEBI:72587"/>
        <label>2</label>
    </ligand>
</feature>
<feature type="binding site" evidence="11 20">
    <location>
        <position position="382"/>
    </location>
    <ligand>
        <name>dopamine</name>
        <dbReference type="ChEBI" id="CHEBI:59905"/>
        <label>2</label>
    </ligand>
</feature>
<feature type="binding site" evidence="10 34">
    <location>
        <position position="418"/>
    </location>
    <ligand>
        <name>Na(+)</name>
        <dbReference type="ChEBI" id="CHEBI:29101"/>
        <label>1</label>
    </ligand>
</feature>
<feature type="binding site" evidence="10 34">
    <location>
        <position position="419"/>
    </location>
    <ligand>
        <name>Na(+)</name>
        <dbReference type="ChEBI" id="CHEBI:29101"/>
        <label>1</label>
    </ligand>
</feature>
<feature type="glycosylation site" description="N-linked (GlcNAc...) asparagine" evidence="3">
    <location>
        <position position="184"/>
    </location>
</feature>
<feature type="glycosylation site" description="N-linked (GlcNAc...) asparagine" evidence="3">
    <location>
        <position position="192"/>
    </location>
</feature>
<feature type="glycosylation site" description="N-linked (GlcNAc...) asparagine" evidence="3">
    <location>
        <position position="198"/>
    </location>
</feature>
<feature type="disulfide bond" evidence="19 20 21 22 23 24 25 26 35">
    <location>
        <begin position="176"/>
        <end position="185"/>
    </location>
</feature>
<feature type="splice variant" id="VSP_054119" description="In isoform 3." evidence="15">
    <original>MLLARMNPQVQPENNGADTGPEQPLRARKTAELLVVKERNGVQCLLAPRDGDAQPRETWGKKIDFLLSVVGFAVDLANVWRFPYLCYKNGGGAFLIPYTLFLIIAGMPLFYMELALGQYNREGAATVWKICPFFK</original>
    <variation>MGVQWWSHTQGEVAVGLGLGDSYLTPCPCP</variation>
    <location>
        <begin position="1"/>
        <end position="135"/>
    </location>
</feature>
<feature type="splice variant" id="VSP_044479" description="In isoform 2." evidence="17">
    <original>LQHWLAI</original>
    <variation>MKTRQGRRRATNSCQISC</variation>
    <location>
        <begin position="611"/>
        <end position="617"/>
    </location>
</feature>
<feature type="sequence variant" id="VAR_029157" description="In dbSNP:rs11568323.">
    <original>N</original>
    <variation>K</variation>
    <location>
        <position position="7"/>
    </location>
</feature>
<feature type="sequence variant" id="VAR_011756" description="In dbSNP:rs1805064.">
    <original>V</original>
    <variation>I</variation>
    <location>
        <position position="69"/>
    </location>
</feature>
<feature type="sequence variant" id="VAR_011757" description="In dbSNP:rs1805065.">
    <original>T</original>
    <variation>I</variation>
    <location>
        <position position="99"/>
    </location>
</feature>
<feature type="sequence variant" id="VAR_011758" description="In dbSNP:rs1805066.">
    <original>V</original>
    <variation>I</variation>
    <location>
        <position position="245"/>
    </location>
</feature>
<feature type="sequence variant" id="VAR_020048" description="In dbSNP:rs45564432.">
    <original>T</original>
    <variation>R</variation>
    <location>
        <position position="283"/>
    </location>
</feature>
<feature type="sequence variant" id="VAR_011759" description="In dbSNP:rs5563.">
    <original>N</original>
    <variation>T</variation>
    <location>
        <position position="292"/>
    </location>
</feature>
<feature type="sequence variant" id="VAR_011760" description="In dbSNP:rs5565.">
    <original>V</original>
    <variation>L</variation>
    <location>
        <position position="356"/>
    </location>
</feature>
<feature type="sequence variant" id="VAR_011761" description="In dbSNP:rs5566.">
    <original>A</original>
    <variation>P</variation>
    <location>
        <position position="369"/>
    </location>
</feature>
<feature type="sequence variant" id="VAR_011762" description="In dbSNP:rs5567.">
    <original>N</original>
    <variation>S</variation>
    <location>
        <position position="375"/>
    </location>
</feature>
<feature type="sequence variant" id="VAR_014800" description="In dbSNP:rs2234910.">
    <original>V</original>
    <variation>I</variation>
    <location>
        <position position="449"/>
    </location>
</feature>
<feature type="sequence variant" id="VAR_010022" description="In ORSTI; the orthologous knockin mouse mutation results in phenotypic features similar to ORSTI; results in severely decreased, if any, norepinephrine uptake; 50-fold increased KM for norepinephrine; decreased dopamine uptake; decreased localization at the plasma membrane; dbSNP:rs121918126." evidence="5 8 12">
    <original>A</original>
    <variation>P</variation>
    <location>
        <position position="457"/>
    </location>
</feature>
<feature type="sequence variant" id="VAR_011763" description="In dbSNP:rs5570.">
    <original>K</original>
    <variation>R</variation>
    <location>
        <position position="463"/>
    </location>
</feature>
<feature type="sequence variant" id="VAR_011764" description="In dbSNP:rs1805067.">
    <original>G</original>
    <variation>S</variation>
    <location>
        <position position="478"/>
    </location>
</feature>
<feature type="sequence variant" id="VAR_011765" description="In dbSNP:rs5558.">
    <original>F</original>
    <variation>C</variation>
    <location>
        <position position="528"/>
    </location>
</feature>
<feature type="sequence variant" id="VAR_011766" description="In dbSNP:rs5559.">
    <original>Y</original>
    <variation>H</variation>
    <location>
        <position position="548"/>
    </location>
</feature>
<feature type="sequence variant" id="VAR_021861" description="In dbSNP:rs3743788.">
    <original>I</original>
    <variation>T</variation>
    <location>
        <position position="549"/>
    </location>
</feature>
<feature type="mutagenesis site" description="Decreased protein levels. Decreased dopamine uptake." evidence="12">
    <original>C</original>
    <variation>A</variation>
    <location>
        <position position="44"/>
    </location>
</feature>
<feature type="mutagenesis site" description="Loss of norepinephrine binding." evidence="10">
    <original>F</original>
    <variation>A</variation>
    <location>
        <position position="72"/>
    </location>
</feature>
<feature type="mutagenesis site" description="Loss of norepinephrine binding. Abolishes norepinephrine uptake." evidence="10 11">
    <original>D</original>
    <variation>A</variation>
    <location>
        <position position="75"/>
    </location>
</feature>
<feature type="mutagenesis site" description="Abolishes norepinephrine uptake." evidence="11">
    <original>D</original>
    <variation>N</variation>
    <location>
        <position position="75"/>
    </location>
</feature>
<feature type="mutagenesis site" description="Decreased homodimerization and norepinephrine transport; when associated with A-435, A-438 and A-444." evidence="10">
    <original>K</original>
    <variation>A</variation>
    <location>
        <position position="135"/>
    </location>
</feature>
<feature type="mutagenesis site" description="Decreased norepinephrine uptake." evidence="11">
    <original>V</original>
    <variation>A</variation>
    <location>
        <position position="148"/>
    </location>
</feature>
<feature type="mutagenesis site" description="Decreased norepinephrine uptake." evidence="11">
    <original>G</original>
    <variation>A</variation>
    <location>
        <position position="149"/>
    </location>
</feature>
<feature type="mutagenesis site" description="Loss of norepinephrine binding." evidence="10">
    <original>Y</original>
    <variation>A</variation>
    <location>
        <position position="152"/>
    </location>
</feature>
<feature type="mutagenesis site" description="Severely decreased norepinephrine uptake." evidence="11">
    <original>Y</original>
    <variation>F</variation>
    <location>
        <position position="152"/>
    </location>
</feature>
<feature type="mutagenesis site" description="Abolishes norepinephrine uptake." evidence="11">
    <original>N</original>
    <variation>A</variation>
    <location>
        <position position="153"/>
    </location>
</feature>
<feature type="mutagenesis site" description="Decreased homodimerization and norepinephrine transport; when associated with A-235, A-459 and A-553." evidence="10">
    <original>L</original>
    <variation>A</variation>
    <location>
        <position position="232"/>
    </location>
</feature>
<feature type="mutagenesis site" description="Decreased homodimerization and norepinephrine transport; when associated with A-232, A-459 and A-553." evidence="10">
    <original>W</original>
    <variation>A</variation>
    <location>
        <position position="235"/>
    </location>
</feature>
<feature type="mutagenesis site" description="Loss of norepinephrine binding." evidence="10">
    <original>F</original>
    <variation>A</variation>
    <location>
        <position position="317"/>
    </location>
</feature>
<feature type="mutagenesis site" description="Loss of norepinephrine binding." evidence="10">
    <original>G</original>
    <variation>A</variation>
    <location>
        <position position="320"/>
    </location>
</feature>
<feature type="mutagenesis site" description="Loss of norepinephrine binding. Abolishes norepinephrine uptake." evidence="10 11">
    <original>F</original>
    <variation>A</variation>
    <location>
        <position position="323"/>
    </location>
</feature>
<feature type="mutagenesis site" description="Decreased norepinephrine uptake." evidence="11">
    <original>V</original>
    <variation>A</variation>
    <location>
        <position position="325"/>
    </location>
</feature>
<feature type="mutagenesis site" description="Loss of norepinephrine binding." evidence="10">
    <original>S</original>
    <variation>A</variation>
    <location>
        <position position="419"/>
    </location>
</feature>
<feature type="mutagenesis site" description="No effect on norepinephrine binding. Decreased norepinephrine uptake." evidence="10 11">
    <original>S</original>
    <variation>A</variation>
    <location>
        <position position="420"/>
    </location>
</feature>
<feature type="mutagenesis site" description="Loss of norepinephrine binding. Abolishes norepinephrine uptake." evidence="10 11">
    <original>G</original>
    <variation>A</variation>
    <location>
        <position position="423"/>
    </location>
</feature>
<feature type="mutagenesis site" description="Decreased homodimerization and norepinephrine transport; when associated with A-135, A-438 and A-444." evidence="10">
    <original>F</original>
    <variation>A</variation>
    <location>
        <position position="435"/>
    </location>
</feature>
<feature type="mutagenesis site" description="Decreased homodimerization and norepinephrine transport; when associated with A-135, A-435 and A-444." evidence="10">
    <original>L</original>
    <variation>A</variation>
    <location>
        <position position="438"/>
    </location>
</feature>
<feature type="mutagenesis site" description="Decreased homodimerization and norepinephrine transport; when associated with A-135, A-435 and A-438." evidence="10">
    <original>L</original>
    <variation>A</variation>
    <location>
        <position position="444"/>
    </location>
</feature>
<feature type="mutagenesis site" description="Decreased homodimerization and norepinephrine transport; when associated with A-232, A-235 and A-553." evidence="10">
    <original>F</original>
    <variation>A</variation>
    <location>
        <position position="459"/>
    </location>
</feature>
<feature type="mutagenesis site" description="Decreased homodimerization and norepinephrine transport; when associated with A-232, A-235 and A-459." evidence="10">
    <original>W</original>
    <variation>A</variation>
    <location>
        <position position="553"/>
    </location>
</feature>
<feature type="helix" evidence="36">
    <location>
        <begin position="61"/>
        <end position="73"/>
    </location>
</feature>
<feature type="helix" evidence="36">
    <location>
        <begin position="76"/>
        <end position="88"/>
    </location>
</feature>
<feature type="turn" evidence="45">
    <location>
        <begin position="89"/>
        <end position="91"/>
    </location>
</feature>
<feature type="helix" evidence="37">
    <location>
        <begin position="92"/>
        <end position="94"/>
    </location>
</feature>
<feature type="helix" evidence="36">
    <location>
        <begin position="95"/>
        <end position="104"/>
    </location>
</feature>
<feature type="helix" evidence="36">
    <location>
        <begin position="106"/>
        <end position="120"/>
    </location>
</feature>
<feature type="helix" evidence="36">
    <location>
        <begin position="126"/>
        <end position="129"/>
    </location>
</feature>
<feature type="helix" evidence="36">
    <location>
        <begin position="132"/>
        <end position="134"/>
    </location>
</feature>
<feature type="helix" evidence="36">
    <location>
        <begin position="135"/>
        <end position="165"/>
    </location>
</feature>
<feature type="strand" evidence="36">
    <location>
        <begin position="167"/>
        <end position="170"/>
    </location>
</feature>
<feature type="strand" evidence="36">
    <location>
        <begin position="174"/>
        <end position="176"/>
    </location>
</feature>
<feature type="strand" evidence="42">
    <location>
        <begin position="178"/>
        <end position="180"/>
    </location>
</feature>
<feature type="turn" evidence="36">
    <location>
        <begin position="188"/>
        <end position="190"/>
    </location>
</feature>
<feature type="strand" evidence="44">
    <location>
        <begin position="191"/>
        <end position="193"/>
    </location>
</feature>
<feature type="strand" evidence="38">
    <location>
        <begin position="201"/>
        <end position="203"/>
    </location>
</feature>
<feature type="strand" evidence="42">
    <location>
        <begin position="205"/>
        <end position="208"/>
    </location>
</feature>
<feature type="helix" evidence="36">
    <location>
        <begin position="209"/>
        <end position="216"/>
    </location>
</feature>
<feature type="turn" evidence="42">
    <location>
        <begin position="217"/>
        <end position="219"/>
    </location>
</feature>
<feature type="helix" evidence="36">
    <location>
        <begin position="221"/>
        <end position="223"/>
    </location>
</feature>
<feature type="helix" evidence="39">
    <location>
        <begin position="227"/>
        <end position="229"/>
    </location>
</feature>
<feature type="helix" evidence="36">
    <location>
        <begin position="235"/>
        <end position="252"/>
    </location>
</feature>
<feature type="strand" evidence="41">
    <location>
        <begin position="253"/>
        <end position="256"/>
    </location>
</feature>
<feature type="strand" evidence="37">
    <location>
        <begin position="260"/>
        <end position="262"/>
    </location>
</feature>
<feature type="helix" evidence="36">
    <location>
        <begin position="265"/>
        <end position="282"/>
    </location>
</feature>
<feature type="helix" evidence="36">
    <location>
        <begin position="287"/>
        <end position="294"/>
    </location>
</feature>
<feature type="helix" evidence="36">
    <location>
        <begin position="299"/>
        <end position="302"/>
    </location>
</feature>
<feature type="strand" evidence="43">
    <location>
        <begin position="303"/>
        <end position="305"/>
    </location>
</feature>
<feature type="helix" evidence="36">
    <location>
        <begin position="306"/>
        <end position="319"/>
    </location>
</feature>
<feature type="turn" evidence="46">
    <location>
        <begin position="321"/>
        <end position="324"/>
    </location>
</feature>
<feature type="helix" evidence="36">
    <location>
        <begin position="325"/>
        <end position="330"/>
    </location>
</feature>
<feature type="helix" evidence="36">
    <location>
        <begin position="339"/>
        <end position="372"/>
    </location>
</feature>
<feature type="turn" evidence="36">
    <location>
        <begin position="376"/>
        <end position="378"/>
    </location>
</feature>
<feature type="turn" evidence="46">
    <location>
        <begin position="382"/>
        <end position="384"/>
    </location>
</feature>
<feature type="helix" evidence="36">
    <location>
        <begin position="386"/>
        <end position="395"/>
    </location>
</feature>
<feature type="strand" evidence="37">
    <location>
        <begin position="398"/>
        <end position="400"/>
    </location>
</feature>
<feature type="helix" evidence="36">
    <location>
        <begin position="401"/>
        <end position="434"/>
    </location>
</feature>
<feature type="helix" evidence="36">
    <location>
        <begin position="436"/>
        <end position="439"/>
    </location>
</feature>
<feature type="helix" evidence="36">
    <location>
        <begin position="442"/>
        <end position="458"/>
    </location>
</feature>
<feature type="helix" evidence="36">
    <location>
        <begin position="465"/>
        <end position="475"/>
    </location>
</feature>
<feature type="strand" evidence="40">
    <location>
        <begin position="476"/>
        <end position="478"/>
    </location>
</feature>
<feature type="helix" evidence="36">
    <location>
        <begin position="479"/>
        <end position="493"/>
    </location>
</feature>
<feature type="turn" evidence="36">
    <location>
        <begin position="494"/>
        <end position="497"/>
    </location>
</feature>
<feature type="helix" evidence="36">
    <location>
        <begin position="498"/>
        <end position="509"/>
    </location>
</feature>
<feature type="helix" evidence="36">
    <location>
        <begin position="515"/>
        <end position="522"/>
    </location>
</feature>
<feature type="helix" evidence="36">
    <location>
        <begin position="524"/>
        <end position="538"/>
    </location>
</feature>
<feature type="helix" evidence="36">
    <location>
        <begin position="552"/>
        <end position="566"/>
    </location>
</feature>
<feature type="helix" evidence="36">
    <location>
        <begin position="568"/>
        <end position="579"/>
    </location>
</feature>
<feature type="helix" evidence="36">
    <location>
        <begin position="584"/>
        <end position="592"/>
    </location>
</feature>
<feature type="helix" evidence="36">
    <location>
        <begin position="595"/>
        <end position="603"/>
    </location>
</feature>
<feature type="helix" evidence="36">
    <location>
        <begin position="607"/>
        <end position="609"/>
    </location>
</feature>
<feature type="helix" evidence="36">
    <location>
        <begin position="611"/>
        <end position="614"/>
    </location>
</feature>
<name>SC6A2_HUMAN</name>
<sequence length="617" mass="69332">MLLARMNPQVQPENNGADTGPEQPLRARKTAELLVVKERNGVQCLLAPRDGDAQPRETWGKKIDFLLSVVGFAVDLANVWRFPYLCYKNGGGAFLIPYTLFLIIAGMPLFYMELALGQYNREGAATVWKICPFFKGVGYAVILIALYVGFYYNVIIAWSLYYLFSSFTLNLPWTDCGHTWNSPNCTDPKLLNGSVLGNHTKYSKYKFTPAAEFYERGVLHLHESSGIHDIGLPQWQLLLCLMVVVIVLYFSLWKGVKTSGKVVWITATLPYFVLFVLLVHGVTLPGASNGINAYLHIDFYRLKEATVWIDAATQIFFSLGAGFGVLIAFASYNKFDNNCYRDALLTSSINCITSFVSGFAIFSILGYMAHEHKVNIEDVATEGAGLVFILYPEAISTLSGSTFWAVVFFVMLLALGLDSSMGGMEAVITGLADDFQVLKRHRKLFTFGVTFSTFLLALFCITKGGIYVLTLLDTFAAGTSILFAVLMEAIGVSWFYGVDRFSNDIQQMMGFRPGLYWRLCWKFVSPAFLLFVVVVSIINFKPLTYDDYIFPPWANWVGWGIALSSMVLVPIYVIYKFLSTQGSLWERLAYGITPENEHHLVAQRDIRQFQLQHWLAI</sequence>